<protein>
    <recommendedName>
        <fullName>Histone H4</fullName>
    </recommendedName>
</protein>
<comment type="function">
    <text>Core component of nucleosome. Nucleosomes wrap and compact DNA into chromatin, limiting DNA accessibility to the cellular machineries which require DNA as a template. Histones thereby play a central role in transcription regulation, DNA repair, DNA replication and chromosomal stability. DNA accessibility is regulated via a complex set of post-translational modifications of histones, also called histone code, and nucleosome remodeling.</text>
</comment>
<comment type="subunit">
    <text>The nucleosome is a histone octamer containing two molecules each of H2A, H2B, H3 and H4 assembled in one H3-H4 heterotetramer and two H2A-H2B heterodimers. The octamer wraps approximately 147 bp of DNA.</text>
</comment>
<comment type="interaction">
    <interactant intactId="EBI-302085">
        <id>P62799</id>
    </interactant>
    <interactant intactId="EBI-350041">
        <id>P84233</id>
    </interactant>
    <organismsDiffer>false</organismsDiffer>
    <experiments>2</experiments>
</comment>
<comment type="interaction">
    <interactant intactId="EBI-302085">
        <id>P62799</id>
    </interactant>
    <interactant intactId="EBI-352227">
        <id>Q16576</id>
        <label>RBBP7</label>
    </interactant>
    <organismsDiffer>true</organismsDiffer>
    <experiments>2</experiments>
</comment>
<comment type="subcellular location">
    <subcellularLocation>
        <location>Nucleus</location>
    </subcellularLocation>
    <subcellularLocation>
        <location>Chromosome</location>
    </subcellularLocation>
</comment>
<comment type="PTM">
    <text evidence="2">Acetylation at Lys-6 (H4K5ac), Lys-9 (H4K8ac), Lys-13 (H4K12ac) and Lys-17 (H4K16ac) occurs in coding regions of the genome but not in heterochromatin.</text>
</comment>
<comment type="PTM">
    <text evidence="2">Citrullination at Arg-4 (H4R3ci) by PADI4 impairs methylation.</text>
</comment>
<comment type="PTM">
    <text evidence="2">Monomethylation and asymmetric dimethylation at Arg-4 (H4R3me1 and H4R3me2a, respectively) by PRMT1 favors acetylation at Lys-9 (H4K8ac) and Lys-13 (H4K12ac). Demethylation is performed by JMJD6. Symmetric dimethylation on Arg-4 (H4R3me2s) by the PRDM1/PRMT5 complex may play a crucial role in the germ-cell lineage (By similarity).</text>
</comment>
<comment type="PTM">
    <text evidence="2">Monomethylated, dimethylated or trimethylated at Lys-21 (H4K20me1, H4K20me2, H4K20me3). Monomethylation is performed by KMT5A/SET8. Trimethylation is performed by KMT5B and KMT5C and induces gene silencing. Monomethylated at Lys-13 (H4K12me1) by N6AMT1; H4K12me1 modification is present at the promoters of numerous genes encoding cell cycle regulators.</text>
</comment>
<comment type="PTM">
    <text evidence="2">Acetyl-methylated at Lys-6 and Lys-13 (H4K5acme and H4K12acme, respectively), acetyl-methylation is an epigenetic mark of active chromatin associated with increased transcriptional initiation. Acetyl-methylation is formed by acetylation by EP300/p300 of lysine residues that are already monomethylated on the same side chain. H4K5acme and H4K12acme marks specifically bind BRD2.</text>
</comment>
<comment type="PTM">
    <text evidence="2">Phosphorylated by pak2 at Ser-48 (H4S47ph). This phosphorylation increases the association of H3.3-H4 with the histone chaperone HIRA, thus promoting nucleosome assembly of H3.3-H4 and inhibiting nucleosome assembly of H3.1-H4 (By similarity).</text>
</comment>
<comment type="PTM">
    <text evidence="2">Ubiquitinated by the CUL4-DDB-RBX1 complex in response to ultraviolet irradiation. This may weaken the interaction between histones and DNA and facilitate DNA accessibility to repair proteins. Monoubiquitinated at Lys-92 of histone H4 (H4K91ub1) in response to DNA damage. The exact role of H4K91ub1 in DNA damage response is still unclear but it may function as a licensing signal for additional histone H4 post-translational modifications such as H4 Lys-21 methylation (H4K20me) (By similarity).</text>
</comment>
<comment type="PTM">
    <text evidence="2">Sumoylated, which is associated with transcriptional repression.</text>
</comment>
<comment type="PTM">
    <text evidence="3">Butyrylation of histones marks active promoters and competes with histone acetylation.</text>
</comment>
<comment type="PTM">
    <text evidence="2">Glutarylation at Lys-92 (H4K91glu) destabilizes nucleosomes by promoting dissociation of the H2A-H2B dimers from nucleosomes.</text>
</comment>
<comment type="PTM">
    <text evidence="2">Ufmylated; monofmylated by UFL1 at Lys-32 (H4K31Ufm1) in response to DNA damage.</text>
</comment>
<comment type="PTM">
    <text evidence="2">Lactylated in macrophages by EP300/P300 by using lactoyl-CoA directly derived from endogenous or exogenous lactate, leading to stimulates gene transcription. Delactylated by SIRT3 at Lys-17 (H4K16la).</text>
</comment>
<comment type="similarity">
    <text evidence="5">Belongs to the histone H4 family.</text>
</comment>
<sequence length="103" mass="11367">MSGRGKGGKGLGKGGAKRHRKVLRDNIQGITKPAIRRLARRGGVKRISGLIYEETRGVLKVFLENVIRDAVTYTEHAKRKTVTAMDVVYALKRQGRTLYGFGG</sequence>
<feature type="initiator methionine" description="Removed" evidence="1">
    <location>
        <position position="1"/>
    </location>
</feature>
<feature type="chain" id="PRO_0000158376" description="Histone H4">
    <location>
        <begin position="2"/>
        <end position="103"/>
    </location>
</feature>
<feature type="DNA-binding region">
    <location>
        <begin position="17"/>
        <end position="21"/>
    </location>
</feature>
<feature type="region of interest" description="Disordered" evidence="4">
    <location>
        <begin position="1"/>
        <end position="20"/>
    </location>
</feature>
<feature type="compositionally biased region" description="Gly residues" evidence="4">
    <location>
        <begin position="1"/>
        <end position="14"/>
    </location>
</feature>
<feature type="modified residue" description="N-acetylserine" evidence="2">
    <location>
        <position position="2"/>
    </location>
</feature>
<feature type="modified residue" description="Phosphoserine" evidence="2">
    <location>
        <position position="2"/>
    </location>
</feature>
<feature type="modified residue" description="Asymmetric dimethylarginine; by PRMT1; alternate" evidence="2">
    <location>
        <position position="4"/>
    </location>
</feature>
<feature type="modified residue" description="Citrulline; alternate" evidence="2">
    <location>
        <position position="4"/>
    </location>
</feature>
<feature type="modified residue" description="Omega-N-methylarginine; by PRMT1; alternate" evidence="2">
    <location>
        <position position="4"/>
    </location>
</feature>
<feature type="modified residue" description="Symmetric dimethylarginine; by PRMT5 and PRMT7; alternate" evidence="2">
    <location>
        <position position="4"/>
    </location>
</feature>
<feature type="modified residue" description="N6-(2-hydroxyisobutyryl)lysine; alternate" evidence="2">
    <location>
        <position position="6"/>
    </location>
</feature>
<feature type="modified residue" description="N6-acetyl-N6-methyllysine; alternate" evidence="2">
    <location>
        <position position="6"/>
    </location>
</feature>
<feature type="modified residue" description="N6-acetyllysine" evidence="2">
    <location>
        <position position="6"/>
    </location>
</feature>
<feature type="modified residue" description="N6-butyryllysine; alternate" evidence="2">
    <location>
        <position position="6"/>
    </location>
</feature>
<feature type="modified residue" description="N6-glutaryllysine; alternate" evidence="2">
    <location>
        <position position="6"/>
    </location>
</feature>
<feature type="modified residue" description="N6-lactoyllysine; alternate" evidence="2">
    <location>
        <position position="6"/>
    </location>
</feature>
<feature type="modified residue" description="N6-(2-hydroxyisobutyryl)lysine; alternate" evidence="2">
    <location>
        <position position="9"/>
    </location>
</feature>
<feature type="modified residue" description="N6-acetyllysine" evidence="2">
    <location>
        <position position="9"/>
    </location>
</feature>
<feature type="modified residue" description="N6-butyryllysine; alternate" evidence="2">
    <location>
        <position position="9"/>
    </location>
</feature>
<feature type="modified residue" description="N6-lactoyllysine; alternate" evidence="2">
    <location>
        <position position="9"/>
    </location>
</feature>
<feature type="modified residue" description="N6-propionyllysine; alternate" evidence="2">
    <location>
        <position position="9"/>
    </location>
</feature>
<feature type="modified residue" description="N6-(2-hydroxyisobutyryl)lysine; alternate" evidence="2">
    <location>
        <position position="13"/>
    </location>
</feature>
<feature type="modified residue" description="N6-acetyl-N6-methyllysine; alternate" evidence="2">
    <location>
        <position position="13"/>
    </location>
</feature>
<feature type="modified residue" description="N6-acetyllysine" evidence="2">
    <location>
        <position position="13"/>
    </location>
</feature>
<feature type="modified residue" description="N6-butyryllysine; alternate" evidence="2">
    <location>
        <position position="13"/>
    </location>
</feature>
<feature type="modified residue" description="N6-glutaryllysine; alternate" evidence="2">
    <location>
        <position position="13"/>
    </location>
</feature>
<feature type="modified residue" description="N6-lactoyllysine; alternate" evidence="2">
    <location>
        <position position="13"/>
    </location>
</feature>
<feature type="modified residue" description="N6-methyllysine; alternate" evidence="2">
    <location>
        <position position="13"/>
    </location>
</feature>
<feature type="modified residue" description="N6-(2-hydroxyisobutyryl)lysine; alternate" evidence="2">
    <location>
        <position position="17"/>
    </location>
</feature>
<feature type="modified residue" description="N6-acetyllysine" evidence="2">
    <location>
        <position position="17"/>
    </location>
</feature>
<feature type="modified residue" description="N6-butyryllysine; alternate" evidence="2">
    <location>
        <position position="17"/>
    </location>
</feature>
<feature type="modified residue" description="N6-lactoyllysine; alternate" evidence="2">
    <location>
        <position position="17"/>
    </location>
</feature>
<feature type="modified residue" description="N6-propionyllysine; alternate" evidence="2">
    <location>
        <position position="17"/>
    </location>
</feature>
<feature type="modified residue" description="N6,N6,N6-trimethyllysine; alternate" evidence="2">
    <location>
        <position position="21"/>
    </location>
</feature>
<feature type="modified residue" description="N6,N6-dimethyllysine; alternate" evidence="2">
    <location>
        <position position="21"/>
    </location>
</feature>
<feature type="modified residue" description="N6-methylated lysine" evidence="2">
    <location>
        <position position="21"/>
    </location>
</feature>
<feature type="modified residue" description="N6-methyllysine; alternate" evidence="2">
    <location>
        <position position="21"/>
    </location>
</feature>
<feature type="modified residue" description="N6-(2-hydroxyisobutyryl)lysine; alternate" evidence="2">
    <location>
        <position position="32"/>
    </location>
</feature>
<feature type="modified residue" description="N6-acetyllysine" evidence="2">
    <location>
        <position position="32"/>
    </location>
</feature>
<feature type="modified residue" description="N6-butyryllysine; alternate" evidence="2">
    <location>
        <position position="32"/>
    </location>
</feature>
<feature type="modified residue" description="N6-glutaryllysine; alternate" evidence="2">
    <location>
        <position position="32"/>
    </location>
</feature>
<feature type="modified residue" description="N6-lactoyllysine; alternate" evidence="2">
    <location>
        <position position="32"/>
    </location>
</feature>
<feature type="modified residue" description="N6-propionyllysine; alternate" evidence="2">
    <location>
        <position position="32"/>
    </location>
</feature>
<feature type="modified residue" description="N6-succinyllysine; alternate" evidence="2">
    <location>
        <position position="32"/>
    </location>
</feature>
<feature type="modified residue" description="N6-(2-hydroxyisobutyryl)lysine; alternate" evidence="2">
    <location>
        <position position="45"/>
    </location>
</feature>
<feature type="modified residue" description="N6-butyryllysine; alternate" evidence="2">
    <location>
        <position position="45"/>
    </location>
</feature>
<feature type="modified residue" description="N6-propionyllysine; alternate" evidence="2">
    <location>
        <position position="45"/>
    </location>
</feature>
<feature type="modified residue" description="Phosphoserine; by PAK2" evidence="2">
    <location>
        <position position="48"/>
    </location>
</feature>
<feature type="modified residue" description="Phosphotyrosine" evidence="2">
    <location>
        <position position="52"/>
    </location>
</feature>
<feature type="modified residue" description="N6-(2-hydroxyisobutyryl)lysine" evidence="2">
    <location>
        <position position="60"/>
    </location>
</feature>
<feature type="modified residue" description="N6-acetyllysine" evidence="2">
    <location>
        <position position="60"/>
    </location>
</feature>
<feature type="modified residue" description="N6-glutaryllysine; alternate" evidence="2">
    <location>
        <position position="60"/>
    </location>
</feature>
<feature type="modified residue" description="N6-(2-hydroxyisobutyryl)lysine; alternate" evidence="2">
    <location>
        <position position="78"/>
    </location>
</feature>
<feature type="modified residue" description="N6-butyryllysine; alternate" evidence="2">
    <location>
        <position position="78"/>
    </location>
</feature>
<feature type="modified residue" description="N6-glutaryllysine; alternate" evidence="2">
    <location>
        <position position="78"/>
    </location>
</feature>
<feature type="modified residue" description="N6-lactoyllysine; alternate" evidence="2">
    <location>
        <position position="78"/>
    </location>
</feature>
<feature type="modified residue" description="N6-propionyllysine; alternate" evidence="2">
    <location>
        <position position="78"/>
    </location>
</feature>
<feature type="modified residue" description="N6-succinyllysine" evidence="2">
    <location>
        <position position="78"/>
    </location>
</feature>
<feature type="modified residue" description="N6-(2-hydroxyisobutyryl)lysine; alternate" evidence="2">
    <location>
        <position position="80"/>
    </location>
</feature>
<feature type="modified residue" description="N6-acetyllysine" evidence="2">
    <location>
        <position position="80"/>
    </location>
</feature>
<feature type="modified residue" description="N6-butyryllysine; alternate" evidence="2">
    <location>
        <position position="80"/>
    </location>
</feature>
<feature type="modified residue" description="N6-glutaryllysine; alternate" evidence="2">
    <location>
        <position position="80"/>
    </location>
</feature>
<feature type="modified residue" description="N6-propionyllysine; alternate" evidence="2">
    <location>
        <position position="80"/>
    </location>
</feature>
<feature type="modified residue" description="Phosphotyrosine" evidence="2">
    <location>
        <position position="89"/>
    </location>
</feature>
<feature type="modified residue" description="N6-(2-hydroxyisobutyryl)lysine; alternate" evidence="2">
    <location>
        <position position="92"/>
    </location>
</feature>
<feature type="modified residue" description="N6-acetyllysine; alternate" evidence="2">
    <location>
        <position position="92"/>
    </location>
</feature>
<feature type="modified residue" description="N6-butyryllysine; alternate" evidence="2">
    <location>
        <position position="92"/>
    </location>
</feature>
<feature type="modified residue" description="N6-glutaryllysine; alternate" evidence="2">
    <location>
        <position position="92"/>
    </location>
</feature>
<feature type="modified residue" description="N6-lactoyllysine; alternate" evidence="2">
    <location>
        <position position="92"/>
    </location>
</feature>
<feature type="modified residue" description="N6-propionyllysine; alternate" evidence="2">
    <location>
        <position position="92"/>
    </location>
</feature>
<feature type="modified residue" description="N6-succinyllysine; alternate" evidence="2">
    <location>
        <position position="92"/>
    </location>
</feature>
<feature type="cross-link" description="Glycyl lysine isopeptide (Lys-Gly) (interchain with G-Cter in UFM1); alternate" evidence="2">
    <location>
        <position position="32"/>
    </location>
</feature>
<feature type="cross-link" description="Glycyl lysine isopeptide (Lys-Gly) (interchain with G-Cter in ubiquitin); alternate" evidence="2">
    <location>
        <position position="92"/>
    </location>
</feature>
<feature type="strand" evidence="13">
    <location>
        <begin position="6"/>
        <end position="12"/>
    </location>
</feature>
<feature type="strand" evidence="14">
    <location>
        <begin position="13"/>
        <end position="17"/>
    </location>
</feature>
<feature type="strand" evidence="17">
    <location>
        <begin position="19"/>
        <end position="21"/>
    </location>
</feature>
<feature type="helix" evidence="15">
    <location>
        <begin position="23"/>
        <end position="26"/>
    </location>
</feature>
<feature type="helix" evidence="16">
    <location>
        <begin position="27"/>
        <end position="29"/>
    </location>
</feature>
<feature type="helix" evidence="15">
    <location>
        <begin position="32"/>
        <end position="41"/>
    </location>
</feature>
<feature type="strand" evidence="18">
    <location>
        <begin position="45"/>
        <end position="47"/>
    </location>
</feature>
<feature type="helix" evidence="15">
    <location>
        <begin position="51"/>
        <end position="76"/>
    </location>
</feature>
<feature type="strand" evidence="15">
    <location>
        <begin position="80"/>
        <end position="82"/>
    </location>
</feature>
<feature type="helix" evidence="15">
    <location>
        <begin position="84"/>
        <end position="90"/>
    </location>
</feature>
<feature type="turn" evidence="15">
    <location>
        <begin position="91"/>
        <end position="94"/>
    </location>
</feature>
<feature type="strand" evidence="15">
    <location>
        <begin position="96"/>
        <end position="100"/>
    </location>
</feature>
<dbReference type="EMBL" id="X00224">
    <property type="protein sequence ID" value="CAA25042.1"/>
    <property type="molecule type" value="Genomic_DNA"/>
</dbReference>
<dbReference type="EMBL" id="X03017">
    <property type="protein sequence ID" value="CAA26809.1"/>
    <property type="molecule type" value="Genomic_DNA"/>
</dbReference>
<dbReference type="EMBL" id="X03017">
    <property type="protein sequence ID" value="CAA26814.1"/>
    <property type="molecule type" value="Genomic_DNA"/>
</dbReference>
<dbReference type="EMBL" id="X03018">
    <property type="protein sequence ID" value="CAA26819.1"/>
    <property type="molecule type" value="Genomic_DNA"/>
</dbReference>
<dbReference type="EMBL" id="M21286">
    <property type="protein sequence ID" value="AAA49761.1"/>
    <property type="molecule type" value="Genomic_DNA"/>
</dbReference>
<dbReference type="EMBL" id="M21286">
    <property type="protein sequence ID" value="AAA49766.1"/>
    <property type="molecule type" value="Genomic_DNA"/>
</dbReference>
<dbReference type="EMBL" id="M21287">
    <property type="protein sequence ID" value="AAA49771.1"/>
    <property type="molecule type" value="Genomic_DNA"/>
</dbReference>
<dbReference type="EMBL" id="BC078038">
    <property type="protein sequence ID" value="AAH78038.1"/>
    <property type="molecule type" value="mRNA"/>
</dbReference>
<dbReference type="PIR" id="A02641">
    <property type="entry name" value="HSXL4"/>
</dbReference>
<dbReference type="RefSeq" id="NP_001087926.1">
    <property type="nucleotide sequence ID" value="NM_001094457.1"/>
</dbReference>
<dbReference type="RefSeq" id="XP_018095104.1">
    <property type="nucleotide sequence ID" value="XM_018239615.2"/>
</dbReference>
<dbReference type="RefSeq" id="XP_018095605.1">
    <property type="nucleotide sequence ID" value="XM_018240116.2"/>
</dbReference>
<dbReference type="RefSeq" id="XP_018095606.1">
    <property type="nucleotide sequence ID" value="XM_018240117.2"/>
</dbReference>
<dbReference type="RefSeq" id="XP_018095629.2">
    <property type="nucleotide sequence ID" value="XM_018240140.2"/>
</dbReference>
<dbReference type="RefSeq" id="XP_018096302.1">
    <property type="nucleotide sequence ID" value="XM_018240813.1"/>
</dbReference>
<dbReference type="RefSeq" id="XP_018097458.1">
    <property type="nucleotide sequence ID" value="XM_018241969.2"/>
</dbReference>
<dbReference type="RefSeq" id="XP_018098137.1">
    <property type="nucleotide sequence ID" value="XM_018242648.2"/>
</dbReference>
<dbReference type="RefSeq" id="XP_018118237.1">
    <property type="nucleotide sequence ID" value="XM_018262748.1"/>
</dbReference>
<dbReference type="RefSeq" id="XP_018120359.1">
    <property type="nucleotide sequence ID" value="XM_018264870.2"/>
</dbReference>
<dbReference type="RefSeq" id="XP_018120360.1">
    <property type="nucleotide sequence ID" value="XM_018264871.1"/>
</dbReference>
<dbReference type="RefSeq" id="XP_041432570.1">
    <property type="nucleotide sequence ID" value="XM_041576636.1"/>
</dbReference>
<dbReference type="RefSeq" id="XP_041432571.1">
    <property type="nucleotide sequence ID" value="XM_041576637.1"/>
</dbReference>
<dbReference type="RefSeq" id="XP_041432572.1">
    <property type="nucleotide sequence ID" value="XM_041576638.1"/>
</dbReference>
<dbReference type="RefSeq" id="XP_041432573.1">
    <property type="nucleotide sequence ID" value="XM_041576639.1"/>
</dbReference>
<dbReference type="RefSeq" id="XP_041432574.1">
    <property type="nucleotide sequence ID" value="XM_041576640.1"/>
</dbReference>
<dbReference type="RefSeq" id="XP_041432575.1">
    <property type="nucleotide sequence ID" value="XM_041576641.1"/>
</dbReference>
<dbReference type="RefSeq" id="XP_041435003.1">
    <property type="nucleotide sequence ID" value="XM_041579069.1"/>
</dbReference>
<dbReference type="RefSeq" id="XP_041435004.1">
    <property type="nucleotide sequence ID" value="XM_041579070.1"/>
</dbReference>
<dbReference type="RefSeq" id="XP_041435005.1">
    <property type="nucleotide sequence ID" value="XM_041579071.1"/>
</dbReference>
<dbReference type="RefSeq" id="XP_041435006.1">
    <property type="nucleotide sequence ID" value="XM_041579072.1"/>
</dbReference>
<dbReference type="RefSeq" id="XP_041444762.1">
    <property type="nucleotide sequence ID" value="XM_041588828.1"/>
</dbReference>
<dbReference type="RefSeq" id="XP_041444767.1">
    <property type="nucleotide sequence ID" value="XM_041588833.1"/>
</dbReference>
<dbReference type="RefSeq" id="XP_041444768.1">
    <property type="nucleotide sequence ID" value="XM_041588834.1"/>
</dbReference>
<dbReference type="RefSeq" id="XP_041444777.1">
    <property type="nucleotide sequence ID" value="XM_041588843.1"/>
</dbReference>
<dbReference type="RefSeq" id="XP_041444783.1">
    <property type="nucleotide sequence ID" value="XM_041588849.1"/>
</dbReference>
<dbReference type="RefSeq" id="XP_041444784.1">
    <property type="nucleotide sequence ID" value="XM_041588850.1"/>
</dbReference>
<dbReference type="RefSeq" id="XP_041444800.1">
    <property type="nucleotide sequence ID" value="XM_041588866.1"/>
</dbReference>
<dbReference type="RefSeq" id="XP_041444801.1">
    <property type="nucleotide sequence ID" value="XM_041588867.1"/>
</dbReference>
<dbReference type="RefSeq" id="XP_041444802.1">
    <property type="nucleotide sequence ID" value="XM_041588868.1"/>
</dbReference>
<dbReference type="RefSeq" id="XP_041444803.1">
    <property type="nucleotide sequence ID" value="XM_041588869.1"/>
</dbReference>
<dbReference type="RefSeq" id="XP_041444804.1">
    <property type="nucleotide sequence ID" value="XM_041588870.1"/>
</dbReference>
<dbReference type="PDB" id="1AOI">
    <property type="method" value="X-ray"/>
    <property type="resolution" value="2.80 A"/>
    <property type="chains" value="B/F=17-103"/>
</dbReference>
<dbReference type="PDB" id="1KX3">
    <property type="method" value="X-ray"/>
    <property type="resolution" value="2.00 A"/>
    <property type="chains" value="B/F=2-103"/>
</dbReference>
<dbReference type="PDB" id="1KX4">
    <property type="method" value="X-ray"/>
    <property type="resolution" value="2.60 A"/>
    <property type="chains" value="B/F=2-103"/>
</dbReference>
<dbReference type="PDB" id="1KX5">
    <property type="method" value="X-ray"/>
    <property type="resolution" value="1.94 A"/>
    <property type="chains" value="B/F=2-103"/>
</dbReference>
<dbReference type="PDB" id="1M18">
    <property type="method" value="X-ray"/>
    <property type="resolution" value="2.45 A"/>
    <property type="chains" value="B/F=2-103"/>
</dbReference>
<dbReference type="PDB" id="1M19">
    <property type="method" value="X-ray"/>
    <property type="resolution" value="2.30 A"/>
    <property type="chains" value="B/F=2-103"/>
</dbReference>
<dbReference type="PDB" id="1M1A">
    <property type="method" value="X-ray"/>
    <property type="resolution" value="2.65 A"/>
    <property type="chains" value="B/F=2-103"/>
</dbReference>
<dbReference type="PDB" id="1P34">
    <property type="method" value="X-ray"/>
    <property type="resolution" value="2.70 A"/>
    <property type="chains" value="B/F=2-103"/>
</dbReference>
<dbReference type="PDB" id="1P3A">
    <property type="method" value="X-ray"/>
    <property type="resolution" value="3.00 A"/>
    <property type="chains" value="B/F=2-103"/>
</dbReference>
<dbReference type="PDB" id="1P3B">
    <property type="method" value="X-ray"/>
    <property type="resolution" value="3.00 A"/>
    <property type="chains" value="B/F=2-103"/>
</dbReference>
<dbReference type="PDB" id="1P3F">
    <property type="method" value="X-ray"/>
    <property type="resolution" value="2.90 A"/>
    <property type="chains" value="B/F=2-103"/>
</dbReference>
<dbReference type="PDB" id="1P3G">
    <property type="method" value="X-ray"/>
    <property type="resolution" value="2.70 A"/>
    <property type="chains" value="B/F=2-103"/>
</dbReference>
<dbReference type="PDB" id="1P3I">
    <property type="method" value="X-ray"/>
    <property type="resolution" value="2.30 A"/>
    <property type="chains" value="B/F=2-103"/>
</dbReference>
<dbReference type="PDB" id="1P3K">
    <property type="method" value="X-ray"/>
    <property type="resolution" value="2.90 A"/>
    <property type="chains" value="B/F=2-103"/>
</dbReference>
<dbReference type="PDB" id="1P3L">
    <property type="method" value="X-ray"/>
    <property type="resolution" value="2.40 A"/>
    <property type="chains" value="B/F=2-103"/>
</dbReference>
<dbReference type="PDB" id="1P3M">
    <property type="method" value="X-ray"/>
    <property type="resolution" value="2.90 A"/>
    <property type="chains" value="B/F=2-103"/>
</dbReference>
<dbReference type="PDB" id="1P3O">
    <property type="method" value="X-ray"/>
    <property type="resolution" value="2.75 A"/>
    <property type="chains" value="B/F=2-103"/>
</dbReference>
<dbReference type="PDB" id="1P3P">
    <property type="method" value="X-ray"/>
    <property type="resolution" value="2.70 A"/>
    <property type="chains" value="B/F=2-103"/>
</dbReference>
<dbReference type="PDB" id="1S32">
    <property type="method" value="X-ray"/>
    <property type="resolution" value="2.05 A"/>
    <property type="chains" value="B/F=2-103"/>
</dbReference>
<dbReference type="PDB" id="1ZBB">
    <property type="method" value="X-ray"/>
    <property type="resolution" value="9.00 A"/>
    <property type="chains" value="B/F/b/f=2-103"/>
</dbReference>
<dbReference type="PDB" id="1ZLA">
    <property type="method" value="X-ray"/>
    <property type="resolution" value="2.90 A"/>
    <property type="chains" value="B/F=2-103"/>
</dbReference>
<dbReference type="PDB" id="2F8N">
    <property type="method" value="X-ray"/>
    <property type="resolution" value="2.90 A"/>
    <property type="chains" value="B/F=1-103"/>
</dbReference>
<dbReference type="PDB" id="2FJ7">
    <property type="method" value="X-ray"/>
    <property type="resolution" value="3.20 A"/>
    <property type="chains" value="B/F=2-103"/>
</dbReference>
<dbReference type="PDB" id="2HUE">
    <property type="method" value="X-ray"/>
    <property type="resolution" value="1.70 A"/>
    <property type="chains" value="C=21-103"/>
</dbReference>
<dbReference type="PDB" id="2IO5">
    <property type="method" value="X-ray"/>
    <property type="resolution" value="2.70 A"/>
    <property type="chains" value="C=2-103"/>
</dbReference>
<dbReference type="PDB" id="2NZD">
    <property type="method" value="X-ray"/>
    <property type="resolution" value="2.65 A"/>
    <property type="chains" value="B/F=2-103"/>
</dbReference>
<dbReference type="PDB" id="3B6F">
    <property type="method" value="X-ray"/>
    <property type="resolution" value="3.45 A"/>
    <property type="chains" value="B/F=2-103"/>
</dbReference>
<dbReference type="PDB" id="3B6G">
    <property type="method" value="X-ray"/>
    <property type="resolution" value="3.45 A"/>
    <property type="chains" value="B/F=2-103"/>
</dbReference>
<dbReference type="PDB" id="3C1B">
    <property type="method" value="X-ray"/>
    <property type="resolution" value="2.20 A"/>
    <property type="chains" value="B/F=2-103"/>
</dbReference>
<dbReference type="PDB" id="3C1C">
    <property type="method" value="X-ray"/>
    <property type="resolution" value="3.15 A"/>
    <property type="chains" value="B/F=2-103"/>
</dbReference>
<dbReference type="PDB" id="3KUY">
    <property type="method" value="X-ray"/>
    <property type="resolution" value="2.90 A"/>
    <property type="chains" value="B/F=2-103"/>
</dbReference>
<dbReference type="PDB" id="3KWQ">
    <property type="method" value="X-ray"/>
    <property type="resolution" value="3.50 A"/>
    <property type="chains" value="B/F=21-103"/>
</dbReference>
<dbReference type="PDB" id="3KXB">
    <property type="method" value="X-ray"/>
    <property type="resolution" value="3.20 A"/>
    <property type="chains" value="B/F=2-103"/>
</dbReference>
<dbReference type="PDB" id="3LEL">
    <property type="method" value="X-ray"/>
    <property type="resolution" value="2.95 A"/>
    <property type="chains" value="B/F/L/P=2-103"/>
</dbReference>
<dbReference type="PDB" id="3LJA">
    <property type="method" value="X-ray"/>
    <property type="resolution" value="2.75 A"/>
    <property type="chains" value="B/F=2-103"/>
</dbReference>
<dbReference type="PDB" id="3LZ0">
    <property type="method" value="X-ray"/>
    <property type="resolution" value="2.50 A"/>
    <property type="chains" value="B/F=2-103"/>
</dbReference>
<dbReference type="PDB" id="3LZ1">
    <property type="method" value="X-ray"/>
    <property type="resolution" value="2.50 A"/>
    <property type="chains" value="B/F=2-103"/>
</dbReference>
<dbReference type="PDB" id="3MGP">
    <property type="method" value="X-ray"/>
    <property type="resolution" value="2.44 A"/>
    <property type="chains" value="B/F=2-103"/>
</dbReference>
<dbReference type="PDB" id="3MGQ">
    <property type="method" value="X-ray"/>
    <property type="resolution" value="2.65 A"/>
    <property type="chains" value="B/F=2-103"/>
</dbReference>
<dbReference type="PDB" id="3MGR">
    <property type="method" value="X-ray"/>
    <property type="resolution" value="2.30 A"/>
    <property type="chains" value="B/F=2-103"/>
</dbReference>
<dbReference type="PDB" id="3MGS">
    <property type="method" value="X-ray"/>
    <property type="resolution" value="3.15 A"/>
    <property type="chains" value="B/F=2-103"/>
</dbReference>
<dbReference type="PDB" id="3MNN">
    <property type="method" value="X-ray"/>
    <property type="resolution" value="2.50 A"/>
    <property type="chains" value="B/F=2-103"/>
</dbReference>
<dbReference type="PDB" id="3MVD">
    <property type="method" value="X-ray"/>
    <property type="resolution" value="2.90 A"/>
    <property type="chains" value="B/F=2-103"/>
</dbReference>
<dbReference type="PDB" id="3O62">
    <property type="method" value="X-ray"/>
    <property type="resolution" value="3.22 A"/>
    <property type="chains" value="B/F=2-103"/>
</dbReference>
<dbReference type="PDB" id="3REH">
    <property type="method" value="X-ray"/>
    <property type="resolution" value="2.50 A"/>
    <property type="chains" value="B/F=2-103"/>
</dbReference>
<dbReference type="PDB" id="3REI">
    <property type="method" value="X-ray"/>
    <property type="resolution" value="2.65 A"/>
    <property type="chains" value="B/F=2-103"/>
</dbReference>
<dbReference type="PDB" id="3REJ">
    <property type="method" value="X-ray"/>
    <property type="resolution" value="2.55 A"/>
    <property type="chains" value="B/F=2-103"/>
</dbReference>
<dbReference type="PDB" id="3REK">
    <property type="method" value="X-ray"/>
    <property type="resolution" value="2.60 A"/>
    <property type="chains" value="B/F=2-103"/>
</dbReference>
<dbReference type="PDB" id="3REL">
    <property type="method" value="X-ray"/>
    <property type="resolution" value="2.70 A"/>
    <property type="chains" value="B/F=2-103"/>
</dbReference>
<dbReference type="PDB" id="3TU4">
    <property type="method" value="X-ray"/>
    <property type="resolution" value="3.00 A"/>
    <property type="chains" value="B/F=2-103"/>
</dbReference>
<dbReference type="PDB" id="3UT9">
    <property type="method" value="X-ray"/>
    <property type="resolution" value="2.20 A"/>
    <property type="chains" value="B/F=2-103"/>
</dbReference>
<dbReference type="PDB" id="3UTA">
    <property type="method" value="X-ray"/>
    <property type="resolution" value="2.07 A"/>
    <property type="chains" value="B/F=2-103"/>
</dbReference>
<dbReference type="PDB" id="3UTB">
    <property type="method" value="X-ray"/>
    <property type="resolution" value="2.20 A"/>
    <property type="chains" value="B/F=2-103"/>
</dbReference>
<dbReference type="PDB" id="4EO5">
    <property type="method" value="X-ray"/>
    <property type="resolution" value="2.35 A"/>
    <property type="chains" value="C=21-103"/>
</dbReference>
<dbReference type="PDB" id="4J8U">
    <property type="method" value="X-ray"/>
    <property type="resolution" value="2.38 A"/>
    <property type="chains" value="B/F=2-103"/>
</dbReference>
<dbReference type="PDB" id="4J8V">
    <property type="method" value="X-ray"/>
    <property type="resolution" value="2.58 A"/>
    <property type="chains" value="B/F=2-103"/>
</dbReference>
<dbReference type="PDB" id="4J8W">
    <property type="method" value="X-ray"/>
    <property type="resolution" value="2.41 A"/>
    <property type="chains" value="B/F=2-103"/>
</dbReference>
<dbReference type="PDB" id="4J8X">
    <property type="method" value="X-ray"/>
    <property type="resolution" value="2.87 A"/>
    <property type="chains" value="B/F=2-103"/>
</dbReference>
<dbReference type="PDB" id="4KGC">
    <property type="method" value="X-ray"/>
    <property type="resolution" value="2.69 A"/>
    <property type="chains" value="B/F=1-103"/>
</dbReference>
<dbReference type="PDB" id="4LD9">
    <property type="method" value="X-ray"/>
    <property type="resolution" value="3.31 A"/>
    <property type="chains" value="B/F=1-103"/>
</dbReference>
<dbReference type="PDB" id="4R8P">
    <property type="method" value="X-ray"/>
    <property type="resolution" value="3.28 A"/>
    <property type="chains" value="B/F=2-103"/>
</dbReference>
<dbReference type="PDB" id="4WU8">
    <property type="method" value="X-ray"/>
    <property type="resolution" value="2.45 A"/>
    <property type="chains" value="B/F=2-103"/>
</dbReference>
<dbReference type="PDB" id="4WU9">
    <property type="method" value="X-ray"/>
    <property type="resolution" value="2.60 A"/>
    <property type="chains" value="B/F=2-103"/>
</dbReference>
<dbReference type="PDB" id="4XUJ">
    <property type="method" value="X-ray"/>
    <property type="resolution" value="3.18 A"/>
    <property type="chains" value="B/F=2-103"/>
</dbReference>
<dbReference type="PDB" id="4XZQ">
    <property type="method" value="X-ray"/>
    <property type="resolution" value="2.40 A"/>
    <property type="chains" value="B/F=25-103"/>
</dbReference>
<dbReference type="PDB" id="4YS3">
    <property type="method" value="X-ray"/>
    <property type="resolution" value="3.00 A"/>
    <property type="chains" value="B/F=25-103"/>
</dbReference>
<dbReference type="PDB" id="4Z66">
    <property type="method" value="X-ray"/>
    <property type="resolution" value="2.50 A"/>
    <property type="chains" value="B/F=22-103"/>
</dbReference>
<dbReference type="PDB" id="4ZBJ">
    <property type="method" value="X-ray"/>
    <property type="resolution" value="2.25 A"/>
    <property type="chains" value="C=21-103"/>
</dbReference>
<dbReference type="PDB" id="4ZUX">
    <property type="method" value="X-ray"/>
    <property type="resolution" value="3.82 A"/>
    <property type="chains" value="B/F/L/P=1-103"/>
</dbReference>
<dbReference type="PDB" id="5BS7">
    <property type="method" value="X-ray"/>
    <property type="resolution" value="3.30 A"/>
    <property type="chains" value="C/D=2-103"/>
</dbReference>
<dbReference type="PDB" id="5BSA">
    <property type="method" value="X-ray"/>
    <property type="resolution" value="4.61 A"/>
    <property type="chains" value="C/D=2-103"/>
</dbReference>
<dbReference type="PDB" id="5CP6">
    <property type="method" value="X-ray"/>
    <property type="resolution" value="2.60 A"/>
    <property type="chains" value="B/F=2-103"/>
</dbReference>
<dbReference type="PDB" id="5DNM">
    <property type="method" value="X-ray"/>
    <property type="resolution" value="2.81 A"/>
    <property type="chains" value="B/F=2-103"/>
</dbReference>
<dbReference type="PDB" id="5DNN">
    <property type="method" value="X-ray"/>
    <property type="resolution" value="2.80 A"/>
    <property type="chains" value="B/F=2-103"/>
</dbReference>
<dbReference type="PDB" id="5E5A">
    <property type="method" value="X-ray"/>
    <property type="resolution" value="2.81 A"/>
    <property type="chains" value="B/F=1-103"/>
</dbReference>
<dbReference type="PDB" id="5F99">
    <property type="method" value="X-ray"/>
    <property type="resolution" value="2.63 A"/>
    <property type="chains" value="B/F=1-103"/>
</dbReference>
<dbReference type="PDB" id="5HQ2">
    <property type="method" value="X-ray"/>
    <property type="resolution" value="4.50 A"/>
    <property type="chains" value="B=2-103"/>
</dbReference>
<dbReference type="PDB" id="5KGF">
    <property type="method" value="EM"/>
    <property type="resolution" value="4.54 A"/>
    <property type="chains" value="B/F=1-103"/>
</dbReference>
<dbReference type="PDB" id="5MLU">
    <property type="method" value="X-ray"/>
    <property type="resolution" value="2.80 A"/>
    <property type="chains" value="B/F=20-103"/>
</dbReference>
<dbReference type="PDB" id="5NL0">
    <property type="method" value="X-ray"/>
    <property type="resolution" value="5.40 A"/>
    <property type="chains" value="B/F/L=2-103"/>
</dbReference>
<dbReference type="PDB" id="5O9G">
    <property type="method" value="EM"/>
    <property type="resolution" value="4.80 A"/>
    <property type="chains" value="B/F=1-103"/>
</dbReference>
<dbReference type="PDB" id="5OMX">
    <property type="method" value="X-ray"/>
    <property type="resolution" value="2.32 A"/>
    <property type="chains" value="B/F=1-103"/>
</dbReference>
<dbReference type="PDB" id="5ONG">
    <property type="method" value="X-ray"/>
    <property type="resolution" value="2.80 A"/>
    <property type="chains" value="B/F=1-103"/>
</dbReference>
<dbReference type="PDB" id="5ONW">
    <property type="method" value="X-ray"/>
    <property type="resolution" value="2.80 A"/>
    <property type="chains" value="B/F=1-103"/>
</dbReference>
<dbReference type="PDB" id="5OXV">
    <property type="method" value="X-ray"/>
    <property type="resolution" value="6.72 A"/>
    <property type="chains" value="B/F/L/P=2-103"/>
</dbReference>
<dbReference type="PDB" id="5OY7">
    <property type="method" value="X-ray"/>
    <property type="resolution" value="5.77 A"/>
    <property type="chains" value="B/F/J/N/R/V/Z/d=2-103"/>
</dbReference>
<dbReference type="PDB" id="5X0X">
    <property type="method" value="EM"/>
    <property type="resolution" value="3.97 A"/>
    <property type="chains" value="B/F=1-103"/>
</dbReference>
<dbReference type="PDB" id="5X0Y">
    <property type="method" value="EM"/>
    <property type="resolution" value="3.97 A"/>
    <property type="chains" value="B/F=2-103"/>
</dbReference>
<dbReference type="PDB" id="5XF6">
    <property type="method" value="X-ray"/>
    <property type="resolution" value="2.63 A"/>
    <property type="chains" value="B/F=2-103"/>
</dbReference>
<dbReference type="PDB" id="5Z3L">
    <property type="method" value="EM"/>
    <property type="resolution" value="4.31 A"/>
    <property type="chains" value="B/F=2-103"/>
</dbReference>
<dbReference type="PDB" id="5Z3O">
    <property type="method" value="EM"/>
    <property type="resolution" value="3.62 A"/>
    <property type="chains" value="B/F=2-103"/>
</dbReference>
<dbReference type="PDB" id="5Z3U">
    <property type="method" value="EM"/>
    <property type="resolution" value="4.31 A"/>
    <property type="chains" value="B/F=2-103"/>
</dbReference>
<dbReference type="PDB" id="5Z3V">
    <property type="method" value="EM"/>
    <property type="resolution" value="4.22 A"/>
    <property type="chains" value="B/F=2-103"/>
</dbReference>
<dbReference type="PDB" id="6ESF">
    <property type="method" value="EM"/>
    <property type="resolution" value="3.70 A"/>
    <property type="chains" value="B/F=2-103"/>
</dbReference>
<dbReference type="PDB" id="6ESG">
    <property type="method" value="EM"/>
    <property type="resolution" value="5.40 A"/>
    <property type="chains" value="B/F=2-103"/>
</dbReference>
<dbReference type="PDB" id="6ESH">
    <property type="method" value="EM"/>
    <property type="resolution" value="5.10 A"/>
    <property type="chains" value="B/F=2-103"/>
</dbReference>
<dbReference type="PDB" id="6ESI">
    <property type="method" value="EM"/>
    <property type="resolution" value="6.30 A"/>
    <property type="chains" value="B/F=2-103"/>
</dbReference>
<dbReference type="PDB" id="6FQ5">
    <property type="method" value="EM"/>
    <property type="resolution" value="3.80 A"/>
    <property type="chains" value="B=19-102, F=19-103"/>
</dbReference>
<dbReference type="PDB" id="6FQ6">
    <property type="method" value="EM"/>
    <property type="resolution" value="4.00 A"/>
    <property type="chains" value="B/F=19-103"/>
</dbReference>
<dbReference type="PDB" id="6FQ8">
    <property type="method" value="EM"/>
    <property type="resolution" value="4.80 A"/>
    <property type="chains" value="B/F=18-103"/>
</dbReference>
<dbReference type="PDB" id="6FTX">
    <property type="method" value="EM"/>
    <property type="resolution" value="4.50 A"/>
    <property type="chains" value="B/F=1-103"/>
</dbReference>
<dbReference type="PDB" id="6G0L">
    <property type="method" value="EM"/>
    <property type="resolution" value="4.50 A"/>
    <property type="chains" value="B/F=1-103"/>
</dbReference>
<dbReference type="PDB" id="6GYT">
    <property type="method" value="X-ray"/>
    <property type="resolution" value="2.50 A"/>
    <property type="chains" value="C=10-17"/>
</dbReference>
<dbReference type="PDB" id="6I84">
    <property type="method" value="EM"/>
    <property type="resolution" value="4.40 A"/>
    <property type="chains" value="O/U=1-103"/>
</dbReference>
<dbReference type="PDB" id="6IRO">
    <property type="method" value="EM"/>
    <property type="resolution" value="3.40 A"/>
    <property type="chains" value="B/F=2-103"/>
</dbReference>
<dbReference type="PDB" id="6IY2">
    <property type="method" value="EM"/>
    <property type="resolution" value="3.47 A"/>
    <property type="chains" value="B/F=16-103"/>
</dbReference>
<dbReference type="PDB" id="6IY3">
    <property type="method" value="EM"/>
    <property type="resolution" value="3.67 A"/>
    <property type="chains" value="B/F=16-103"/>
</dbReference>
<dbReference type="PDB" id="6J99">
    <property type="method" value="EM"/>
    <property type="resolution" value="4.10 A"/>
    <property type="chains" value="B/F=1-103"/>
</dbReference>
<dbReference type="PDB" id="6JM9">
    <property type="method" value="EM"/>
    <property type="resolution" value="7.30 A"/>
    <property type="chains" value="B/F=17-103"/>
</dbReference>
<dbReference type="PDB" id="6JMA">
    <property type="method" value="EM"/>
    <property type="resolution" value="6.80 A"/>
    <property type="chains" value="B/F=17-103"/>
</dbReference>
<dbReference type="PDB" id="6JYL">
    <property type="method" value="EM"/>
    <property type="resolution" value="3.37 A"/>
    <property type="chains" value="B/F=2-103"/>
</dbReference>
<dbReference type="PDB" id="6K1P">
    <property type="method" value="EM"/>
    <property type="resolution" value="3.87 A"/>
    <property type="chains" value="B/F=2-103"/>
</dbReference>
<dbReference type="PDB" id="6KIU">
    <property type="method" value="EM"/>
    <property type="resolution" value="3.20 A"/>
    <property type="chains" value="B/F=2-103"/>
</dbReference>
<dbReference type="PDB" id="6KIV">
    <property type="method" value="EM"/>
    <property type="resolution" value="4.00 A"/>
    <property type="chains" value="B/F=2-103"/>
</dbReference>
<dbReference type="PDB" id="6KIW">
    <property type="method" value="EM"/>
    <property type="resolution" value="4.00 A"/>
    <property type="chains" value="B/F=2-103"/>
</dbReference>
<dbReference type="PDB" id="6KIX">
    <property type="method" value="EM"/>
    <property type="resolution" value="4.10 A"/>
    <property type="chains" value="B/F=2-103"/>
</dbReference>
<dbReference type="PDB" id="6KIZ">
    <property type="method" value="EM"/>
    <property type="resolution" value="4.50 A"/>
    <property type="chains" value="B/F=2-103"/>
</dbReference>
<dbReference type="PDB" id="6KW3">
    <property type="method" value="EM"/>
    <property type="resolution" value="7.13 A"/>
    <property type="chains" value="B/R=1-103"/>
</dbReference>
<dbReference type="PDB" id="6KW4">
    <property type="method" value="EM"/>
    <property type="resolution" value="7.55 A"/>
    <property type="chains" value="B/R=1-103"/>
</dbReference>
<dbReference type="PDB" id="6KW5">
    <property type="method" value="EM"/>
    <property type="resolution" value="10.13 A"/>
    <property type="chains" value="S/W=1-103"/>
</dbReference>
<dbReference type="PDB" id="6LTJ">
    <property type="method" value="EM"/>
    <property type="resolution" value="3.70 A"/>
    <property type="chains" value="B/F=1-103"/>
</dbReference>
<dbReference type="PDB" id="6NE3">
    <property type="method" value="EM"/>
    <property type="resolution" value="3.90 A"/>
    <property type="chains" value="B/F=1-103"/>
</dbReference>
<dbReference type="PDB" id="6NJ9">
    <property type="method" value="EM"/>
    <property type="resolution" value="2.96 A"/>
    <property type="chains" value="B/F=2-103"/>
</dbReference>
<dbReference type="PDB" id="6NN6">
    <property type="method" value="EM"/>
    <property type="resolution" value="3.90 A"/>
    <property type="chains" value="B/F=2-103"/>
</dbReference>
<dbReference type="PDB" id="6NOG">
    <property type="method" value="EM"/>
    <property type="resolution" value="3.90 A"/>
    <property type="chains" value="B/F=2-103"/>
</dbReference>
<dbReference type="PDB" id="6NQA">
    <property type="method" value="EM"/>
    <property type="resolution" value="3.54 A"/>
    <property type="chains" value="B/F=2-103"/>
</dbReference>
<dbReference type="PDB" id="6NZO">
    <property type="method" value="EM"/>
    <property type="resolution" value="3.80 A"/>
    <property type="chains" value="B/F=1-103"/>
</dbReference>
<dbReference type="PDB" id="6O22">
    <property type="method" value="Other"/>
    <property type="chains" value="F=1-103"/>
</dbReference>
<dbReference type="PDB" id="6O96">
    <property type="method" value="EM"/>
    <property type="resolution" value="3.50 A"/>
    <property type="chains" value="B/F=1-103"/>
</dbReference>
<dbReference type="PDB" id="6OM3">
    <property type="method" value="X-ray"/>
    <property type="resolution" value="3.30 A"/>
    <property type="chains" value="B/F/N/R=1-103"/>
</dbReference>
<dbReference type="PDB" id="6PA7">
    <property type="method" value="EM"/>
    <property type="resolution" value="2.94 A"/>
    <property type="chains" value="B/F=1-103"/>
</dbReference>
<dbReference type="PDB" id="6PWV">
    <property type="method" value="EM"/>
    <property type="resolution" value="6.20 A"/>
    <property type="chains" value="H/L=1-103"/>
</dbReference>
<dbReference type="PDB" id="6PWW">
    <property type="method" value="EM"/>
    <property type="resolution" value="4.40 A"/>
    <property type="chains" value="H/L=1-103"/>
</dbReference>
<dbReference type="PDB" id="6PWX">
    <property type="method" value="EM"/>
    <property type="resolution" value="4.20 A"/>
    <property type="chains" value="H/L=1-103"/>
</dbReference>
<dbReference type="PDB" id="6PX1">
    <property type="method" value="EM"/>
    <property type="resolution" value="3.30 A"/>
    <property type="chains" value="B/F=1-103"/>
</dbReference>
<dbReference type="PDB" id="6PX3">
    <property type="method" value="EM"/>
    <property type="resolution" value="4.10 A"/>
    <property type="chains" value="B/F=1-103"/>
</dbReference>
<dbReference type="PDB" id="6R1T">
    <property type="method" value="EM"/>
    <property type="resolution" value="3.70 A"/>
    <property type="chains" value="B/F=17-103"/>
</dbReference>
<dbReference type="PDB" id="6R1U">
    <property type="method" value="EM"/>
    <property type="resolution" value="4.36 A"/>
    <property type="chains" value="B/F=2-103"/>
</dbReference>
<dbReference type="PDB" id="6R25">
    <property type="method" value="EM"/>
    <property type="resolution" value="4.61 A"/>
    <property type="chains" value="B/F=2-103"/>
</dbReference>
<dbReference type="PDB" id="6RYR">
    <property type="method" value="EM"/>
    <property type="resolution" value="3.10 A"/>
    <property type="chains" value="B/F=1-103"/>
</dbReference>
<dbReference type="PDB" id="6RYU">
    <property type="method" value="EM"/>
    <property type="resolution" value="4.00 A"/>
    <property type="chains" value="B/F=1-103"/>
</dbReference>
<dbReference type="PDB" id="6S01">
    <property type="method" value="EM"/>
    <property type="resolution" value="3.20 A"/>
    <property type="chains" value="B/F=2-103"/>
</dbReference>
<dbReference type="PDB" id="6T9L">
    <property type="method" value="EM"/>
    <property type="resolution" value="3.60 A"/>
    <property type="chains" value="B/F=2-103"/>
</dbReference>
<dbReference type="PDB" id="6TDA">
    <property type="method" value="EM"/>
    <property type="resolution" value="15.00 A"/>
    <property type="chains" value="B/F=2-103"/>
</dbReference>
<dbReference type="PDB" id="6TEM">
    <property type="method" value="EM"/>
    <property type="resolution" value="3.90 A"/>
    <property type="chains" value="B/F=1-103"/>
</dbReference>
<dbReference type="PDB" id="6UGM">
    <property type="method" value="EM"/>
    <property type="resolution" value="3.70 A"/>
    <property type="chains" value="B/F=2-103"/>
</dbReference>
<dbReference type="PDB" id="6UH5">
    <property type="method" value="EM"/>
    <property type="resolution" value="3.50 A"/>
    <property type="chains" value="B/F=2-103"/>
</dbReference>
<dbReference type="PDB" id="6UXW">
    <property type="method" value="EM"/>
    <property type="resolution" value="8.96 A"/>
    <property type="chains" value="S/W=2-103"/>
</dbReference>
<dbReference type="PDB" id="6VEN">
    <property type="method" value="EM"/>
    <property type="resolution" value="3.37 A"/>
    <property type="chains" value="B/F=2-103"/>
</dbReference>
<dbReference type="PDB" id="6VYP">
    <property type="method" value="X-ray"/>
    <property type="resolution" value="4.99 A"/>
    <property type="chains" value="B/F/b/f=2-103"/>
</dbReference>
<dbReference type="PDB" id="6VZ4">
    <property type="method" value="EM"/>
    <property type="resolution" value="3.90 A"/>
    <property type="chains" value="B/F=1-103"/>
</dbReference>
<dbReference type="PDB" id="6W5I">
    <property type="method" value="EM"/>
    <property type="resolution" value="6.90 A"/>
    <property type="chains" value="H/L=1-103"/>
</dbReference>
<dbReference type="PDB" id="6W5M">
    <property type="method" value="EM"/>
    <property type="resolution" value="4.60 A"/>
    <property type="chains" value="H/L=1-103"/>
</dbReference>
<dbReference type="PDB" id="6W5N">
    <property type="method" value="EM"/>
    <property type="resolution" value="6.00 A"/>
    <property type="chains" value="H/L=1-103"/>
</dbReference>
<dbReference type="PDB" id="6WKR">
    <property type="method" value="EM"/>
    <property type="resolution" value="3.50 A"/>
    <property type="chains" value="J/Q=1-103"/>
</dbReference>
<dbReference type="PDB" id="6WZ5">
    <property type="method" value="EM"/>
    <property type="resolution" value="2.20 A"/>
    <property type="chains" value="B/F=2-103"/>
</dbReference>
<dbReference type="PDB" id="6WZ9">
    <property type="method" value="EM"/>
    <property type="resolution" value="2.80 A"/>
    <property type="chains" value="B/F=2-103"/>
</dbReference>
<dbReference type="PDB" id="6X0N">
    <property type="method" value="EM"/>
    <property type="resolution" value="10.00 A"/>
    <property type="chains" value="B/F/b/f=2-103"/>
</dbReference>
<dbReference type="PDB" id="6YN1">
    <property type="method" value="X-ray"/>
    <property type="resolution" value="2.35 A"/>
    <property type="chains" value="D/I/N/S/X/c/h/m=21-103"/>
</dbReference>
<dbReference type="PDB" id="6ZHX">
    <property type="method" value="EM"/>
    <property type="resolution" value="2.50 A"/>
    <property type="chains" value="B/F=1-103"/>
</dbReference>
<dbReference type="PDB" id="6ZHY">
    <property type="method" value="EM"/>
    <property type="resolution" value="3.00 A"/>
    <property type="chains" value="B/F=1-103"/>
</dbReference>
<dbReference type="PDB" id="7AT8">
    <property type="method" value="EM"/>
    <property type="resolution" value="4.40 A"/>
    <property type="chains" value="E/I=2-103"/>
</dbReference>
<dbReference type="PDB" id="7CRO">
    <property type="method" value="EM"/>
    <property type="resolution" value="3.75 A"/>
    <property type="chains" value="B/F=2-103"/>
</dbReference>
<dbReference type="PDB" id="7CRP">
    <property type="method" value="EM"/>
    <property type="resolution" value="3.20 A"/>
    <property type="chains" value="B/F=2-103"/>
</dbReference>
<dbReference type="PDB" id="7CRQ">
    <property type="method" value="EM"/>
    <property type="resolution" value="3.15 A"/>
    <property type="chains" value="B/F=2-103"/>
</dbReference>
<dbReference type="PDB" id="7CRR">
    <property type="method" value="EM"/>
    <property type="resolution" value="3.48 A"/>
    <property type="chains" value="B/F=2-103"/>
</dbReference>
<dbReference type="PDB" id="7E8I">
    <property type="method" value="EM"/>
    <property type="resolution" value="3.10 A"/>
    <property type="chains" value="B/F=2-103"/>
</dbReference>
<dbReference type="PDB" id="7EA5">
    <property type="method" value="EM"/>
    <property type="resolution" value="3.30 A"/>
    <property type="chains" value="B/F=25-102"/>
</dbReference>
<dbReference type="PDB" id="7EA8">
    <property type="method" value="EM"/>
    <property type="resolution" value="3.10 A"/>
    <property type="chains" value="B/F=25-102"/>
</dbReference>
<dbReference type="PDB" id="7EG6">
    <property type="method" value="EM"/>
    <property type="resolution" value="3.10 A"/>
    <property type="chains" value="B/F=2-103"/>
</dbReference>
<dbReference type="PDB" id="7EGP">
    <property type="method" value="EM"/>
    <property type="resolution" value="6.90 A"/>
    <property type="chains" value="P/T=2-103"/>
</dbReference>
<dbReference type="PDB" id="7ENN">
    <property type="method" value="EM"/>
    <property type="resolution" value="2.80 A"/>
    <property type="chains" value="F/L=2-103"/>
</dbReference>
<dbReference type="PDB" id="7K6P">
    <property type="method" value="EM"/>
    <property type="resolution" value="3.20 A"/>
    <property type="chains" value="B/F=14-103"/>
</dbReference>
<dbReference type="PDB" id="7K6Q">
    <property type="method" value="EM"/>
    <property type="resolution" value="3.10 A"/>
    <property type="chains" value="B/F=12-103"/>
</dbReference>
<dbReference type="PDB" id="7KBD">
    <property type="method" value="EM"/>
    <property type="resolution" value="3.38 A"/>
    <property type="chains" value="B/F=1-103"/>
</dbReference>
<dbReference type="PDB" id="7KBE">
    <property type="method" value="EM"/>
    <property type="resolution" value="3.50 A"/>
    <property type="chains" value="B/F=1-103"/>
</dbReference>
<dbReference type="PDB" id="7KBF">
    <property type="method" value="EM"/>
    <property type="resolution" value="4.42 A"/>
    <property type="chains" value="B/F=1-103"/>
</dbReference>
<dbReference type="PDB" id="7KTQ">
    <property type="method" value="EM"/>
    <property type="resolution" value="3.30 A"/>
    <property type="chains" value="B/F=25-103"/>
</dbReference>
<dbReference type="PDB" id="7M1X">
    <property type="method" value="EM"/>
    <property type="resolution" value="3.70 A"/>
    <property type="chains" value="B/F=1-103"/>
</dbReference>
<dbReference type="PDB" id="7MBM">
    <property type="method" value="EM"/>
    <property type="chains" value="H/L=1-103"/>
</dbReference>
<dbReference type="PDB" id="7MBN">
    <property type="method" value="EM"/>
    <property type="chains" value="H/L=1-103"/>
</dbReference>
<dbReference type="PDB" id="7NKX">
    <property type="method" value="EM"/>
    <property type="resolution" value="2.90 A"/>
    <property type="chains" value="b/f=1-103"/>
</dbReference>
<dbReference type="PDB" id="7NKY">
    <property type="method" value="EM"/>
    <property type="resolution" value="3.20 A"/>
    <property type="chains" value="b/f=1-103"/>
</dbReference>
<dbReference type="PDB" id="7OH9">
    <property type="method" value="EM"/>
    <property type="resolution" value="3.00 A"/>
    <property type="chains" value="B/F=2-103"/>
</dbReference>
<dbReference type="PDB" id="7OHA">
    <property type="method" value="EM"/>
    <property type="resolution" value="2.90 A"/>
    <property type="chains" value="B/F=2-103"/>
</dbReference>
<dbReference type="PDB" id="7OHB">
    <property type="method" value="EM"/>
    <property type="resolution" value="3.40 A"/>
    <property type="chains" value="B/F=2-103"/>
</dbReference>
<dbReference type="PDB" id="7OHC">
    <property type="method" value="EM"/>
    <property type="resolution" value="2.50 A"/>
    <property type="chains" value="B/F=2-103"/>
</dbReference>
<dbReference type="PDB" id="7OTQ">
    <property type="method" value="EM"/>
    <property type="resolution" value="4.80 A"/>
    <property type="chains" value="B/F=1-103"/>
</dbReference>
<dbReference type="PDB" id="7SSA">
    <property type="method" value="EM"/>
    <property type="resolution" value="3.20 A"/>
    <property type="chains" value="B/F=1-103"/>
</dbReference>
<dbReference type="PDB" id="7SWY">
    <property type="method" value="EM"/>
    <property type="resolution" value="2.60 A"/>
    <property type="chains" value="B/F=2-103"/>
</dbReference>
<dbReference type="PDB" id="7TN2">
    <property type="method" value="EM"/>
    <property type="resolution" value="2.30 A"/>
    <property type="chains" value="B/F=2-103"/>
</dbReference>
<dbReference type="PDB" id="7UD5">
    <property type="method" value="EM"/>
    <property type="resolution" value="4.25 A"/>
    <property type="chains" value="B/F=1-103"/>
</dbReference>
<dbReference type="PDB" id="7UNC">
    <property type="method" value="EM"/>
    <property type="resolution" value="3.00 A"/>
    <property type="chains" value="b/f=1-103"/>
</dbReference>
<dbReference type="PDB" id="7UND">
    <property type="method" value="EM"/>
    <property type="resolution" value="3.00 A"/>
    <property type="chains" value="b/f=1-103"/>
</dbReference>
<dbReference type="PDB" id="7UNK">
    <property type="method" value="EM"/>
    <property type="resolution" value="3.45 A"/>
    <property type="chains" value="E=1-103"/>
</dbReference>
<dbReference type="PDB" id="7UX9">
    <property type="method" value="EM"/>
    <property type="resolution" value="3.20 A"/>
    <property type="chains" value="G/H=1-103"/>
</dbReference>
<dbReference type="PDB" id="7VDT">
    <property type="method" value="EM"/>
    <property type="resolution" value="2.80 A"/>
    <property type="chains" value="B/F=1-103"/>
</dbReference>
<dbReference type="PDB" id="7VDV">
    <property type="method" value="EM"/>
    <property type="resolution" value="3.40 A"/>
    <property type="chains" value="B/F=1-103"/>
</dbReference>
<dbReference type="PDB" id="7VVU">
    <property type="method" value="EM"/>
    <property type="resolution" value="3.40 A"/>
    <property type="chains" value="B/Q=1-103"/>
</dbReference>
<dbReference type="PDB" id="7VVZ">
    <property type="method" value="EM"/>
    <property type="resolution" value="8.80 A"/>
    <property type="chains" value="B/Q=1-103"/>
</dbReference>
<dbReference type="PDB" id="7X3T">
    <property type="method" value="EM"/>
    <property type="resolution" value="5.40 A"/>
    <property type="chains" value="B/F/L/P=1-103"/>
</dbReference>
<dbReference type="PDB" id="7X3V">
    <property type="method" value="EM"/>
    <property type="resolution" value="3.09 A"/>
    <property type="chains" value="B/F=1-103"/>
</dbReference>
<dbReference type="PDB" id="7X3W">
    <property type="method" value="EM"/>
    <property type="resolution" value="3.10 A"/>
    <property type="chains" value="B/F=1-103"/>
</dbReference>
<dbReference type="PDB" id="7X3X">
    <property type="method" value="EM"/>
    <property type="resolution" value="3.20 A"/>
    <property type="chains" value="B/F=1-103"/>
</dbReference>
<dbReference type="PDB" id="7XFC">
    <property type="method" value="EM"/>
    <property type="resolution" value="2.90 A"/>
    <property type="chains" value="B/F=1-103"/>
</dbReference>
<dbReference type="PDB" id="7XFH">
    <property type="method" value="EM"/>
    <property type="resolution" value="2.90 A"/>
    <property type="chains" value="B/F=1-103"/>
</dbReference>
<dbReference type="PDB" id="7XFI">
    <property type="method" value="EM"/>
    <property type="resolution" value="2.90 A"/>
    <property type="chains" value="B/F=1-103"/>
</dbReference>
<dbReference type="PDB" id="7XFJ">
    <property type="method" value="EM"/>
    <property type="resolution" value="3.00 A"/>
    <property type="chains" value="B/F=1-103"/>
</dbReference>
<dbReference type="PDB" id="7XFL">
    <property type="method" value="EM"/>
    <property type="resolution" value="2.80 A"/>
    <property type="chains" value="B/F=1-103"/>
</dbReference>
<dbReference type="PDB" id="7XFM">
    <property type="method" value="EM"/>
    <property type="resolution" value="3.10 A"/>
    <property type="chains" value="B/F=1-103"/>
</dbReference>
<dbReference type="PDB" id="7XFN">
    <property type="method" value="EM"/>
    <property type="resolution" value="2.80 A"/>
    <property type="chains" value="B/F=1-103"/>
</dbReference>
<dbReference type="PDB" id="7XNP">
    <property type="method" value="EM"/>
    <property type="resolution" value="2.90 A"/>
    <property type="chains" value="B/F=1-103"/>
</dbReference>
<dbReference type="PDB" id="7XPX">
    <property type="method" value="EM"/>
    <property type="resolution" value="3.20 A"/>
    <property type="chains" value="B/F=2-103"/>
</dbReference>
<dbReference type="PDB" id="7YI1">
    <property type="method" value="EM"/>
    <property type="resolution" value="2.80 A"/>
    <property type="chains" value="B/F=2-103"/>
</dbReference>
<dbReference type="PDB" id="7YI4">
    <property type="method" value="EM"/>
    <property type="resolution" value="3.96 A"/>
    <property type="chains" value="H/L=2-103"/>
</dbReference>
<dbReference type="PDB" id="7YI5">
    <property type="method" value="EM"/>
    <property type="resolution" value="3.96 A"/>
    <property type="chains" value="H/L=2-103"/>
</dbReference>
<dbReference type="PDB" id="7YRG">
    <property type="method" value="EM"/>
    <property type="resolution" value="4.20 A"/>
    <property type="chains" value="B/F=2-103"/>
</dbReference>
<dbReference type="PDB" id="7ZS9">
    <property type="method" value="EM"/>
    <property type="resolution" value="3.10 A"/>
    <property type="chains" value="b/f=2-103"/>
</dbReference>
<dbReference type="PDB" id="7ZSA">
    <property type="method" value="EM"/>
    <property type="resolution" value="4.00 A"/>
    <property type="chains" value="b/f=2-103"/>
</dbReference>
<dbReference type="PDB" id="7ZSB">
    <property type="method" value="EM"/>
    <property type="resolution" value="6.60 A"/>
    <property type="chains" value="b/f=2-103"/>
</dbReference>
<dbReference type="PDB" id="8A3Y">
    <property type="method" value="EM"/>
    <property type="resolution" value="3.30 A"/>
    <property type="chains" value="b/f=1-103"/>
</dbReference>
<dbReference type="PDB" id="8B0A">
    <property type="method" value="EM"/>
    <property type="resolution" value="3.00 A"/>
    <property type="chains" value="B/F=1-103"/>
</dbReference>
<dbReference type="PDB" id="8BVW">
    <property type="method" value="EM"/>
    <property type="resolution" value="4.00 A"/>
    <property type="chains" value="b/f=1-103"/>
</dbReference>
<dbReference type="PDB" id="8BYQ">
    <property type="method" value="EM"/>
    <property type="resolution" value="4.10 A"/>
    <property type="chains" value="b/f=1-103"/>
</dbReference>
<dbReference type="PDB" id="8BZ1">
    <property type="method" value="EM"/>
    <property type="resolution" value="3.80 A"/>
    <property type="chains" value="b/f=1-103"/>
</dbReference>
<dbReference type="PDB" id="8CBN">
    <property type="method" value="EM"/>
    <property type="resolution" value="3.34 A"/>
    <property type="chains" value="B/F=2-103"/>
</dbReference>
<dbReference type="PDB" id="8CBQ">
    <property type="method" value="EM"/>
    <property type="resolution" value="4.00 A"/>
    <property type="chains" value="B/F=2-103"/>
</dbReference>
<dbReference type="PDB" id="8CEO">
    <property type="method" value="EM"/>
    <property type="resolution" value="3.60 A"/>
    <property type="chains" value="s/w=2-103"/>
</dbReference>
<dbReference type="PDB" id="8CWW">
    <property type="method" value="EM"/>
    <property type="resolution" value="2.74 A"/>
    <property type="chains" value="B/F=2-103"/>
</dbReference>
<dbReference type="PDB" id="8CZE">
    <property type="method" value="EM"/>
    <property type="resolution" value="2.58 A"/>
    <property type="chains" value="B/F=2-103"/>
</dbReference>
<dbReference type="PDB" id="8DU4">
    <property type="method" value="EM"/>
    <property type="resolution" value="3.55 A"/>
    <property type="chains" value="B/F=1-103"/>
</dbReference>
<dbReference type="PDB" id="8ETT">
    <property type="method" value="EM"/>
    <property type="resolution" value="6.68 A"/>
    <property type="chains" value="B/F=1-103"/>
</dbReference>
<dbReference type="PDB" id="8ETV">
    <property type="method" value="EM"/>
    <property type="resolution" value="3.16 A"/>
    <property type="chains" value="B/F=1-103"/>
</dbReference>
<dbReference type="PDB" id="8EU2">
    <property type="method" value="EM"/>
    <property type="resolution" value="2.93 A"/>
    <property type="chains" value="L/P=24-103"/>
</dbReference>
<dbReference type="PDB" id="8EUE">
    <property type="method" value="EM"/>
    <property type="resolution" value="3.48 A"/>
    <property type="chains" value="B/F=23-103"/>
</dbReference>
<dbReference type="PDB" id="8EUJ">
    <property type="method" value="EM"/>
    <property type="resolution" value="3.36 A"/>
    <property type="chains" value="O/h=23-103"/>
</dbReference>
<dbReference type="PDB" id="8F86">
    <property type="method" value="EM"/>
    <property type="resolution" value="3.10 A"/>
    <property type="chains" value="B/F=2-103"/>
</dbReference>
<dbReference type="PDB" id="8G57">
    <property type="method" value="EM"/>
    <property type="resolution" value="3.07 A"/>
    <property type="chains" value="B/F=19-103"/>
</dbReference>
<dbReference type="PDB" id="8G6G">
    <property type="method" value="EM"/>
    <property type="resolution" value="2.93 A"/>
    <property type="chains" value="B/F=1-103"/>
</dbReference>
<dbReference type="PDB" id="8G6H">
    <property type="method" value="EM"/>
    <property type="resolution" value="3.06 A"/>
    <property type="chains" value="B/F=1-103"/>
</dbReference>
<dbReference type="PDB" id="8G6Q">
    <property type="method" value="EM"/>
    <property type="resolution" value="3.41 A"/>
    <property type="chains" value="B/F=1-103"/>
</dbReference>
<dbReference type="PDB" id="8G6S">
    <property type="method" value="EM"/>
    <property type="resolution" value="3.47 A"/>
    <property type="chains" value="B/F=1-103"/>
</dbReference>
<dbReference type="PDB" id="8G86">
    <property type="method" value="EM"/>
    <property type="resolution" value="2.30 A"/>
    <property type="chains" value="B/F=2-103"/>
</dbReference>
<dbReference type="PDB" id="8G88">
    <property type="method" value="EM"/>
    <property type="resolution" value="4.80 A"/>
    <property type="chains" value="B/F=2-103"/>
</dbReference>
<dbReference type="PDB" id="8G8B">
    <property type="method" value="EM"/>
    <property type="resolution" value="4.30 A"/>
    <property type="chains" value="B/F=2-103"/>
</dbReference>
<dbReference type="PDB" id="8G8G">
    <property type="method" value="EM"/>
    <property type="resolution" value="3.20 A"/>
    <property type="chains" value="B/F=2-103"/>
</dbReference>
<dbReference type="PDB" id="8GPN">
    <property type="method" value="EM"/>
    <property type="resolution" value="3.20 A"/>
    <property type="chains" value="B/F=1-103"/>
</dbReference>
<dbReference type="PDB" id="8GXQ">
    <property type="method" value="EM"/>
    <property type="resolution" value="5.04 A"/>
    <property type="chains" value="NB/NF=1-103"/>
</dbReference>
<dbReference type="PDB" id="8GXS">
    <property type="method" value="EM"/>
    <property type="resolution" value="4.16 A"/>
    <property type="chains" value="NB/NF=1-103"/>
</dbReference>
<dbReference type="PDB" id="8HXY">
    <property type="method" value="EM"/>
    <property type="resolution" value="3.10 A"/>
    <property type="chains" value="B/F=2-103"/>
</dbReference>
<dbReference type="PDB" id="8HXZ">
    <property type="method" value="EM"/>
    <property type="resolution" value="3.40 A"/>
    <property type="chains" value="B/F=2-103"/>
</dbReference>
<dbReference type="PDB" id="8HY0">
    <property type="method" value="EM"/>
    <property type="resolution" value="3.10 A"/>
    <property type="chains" value="B/F=2-103"/>
</dbReference>
<dbReference type="PDB" id="8IHM">
    <property type="method" value="EM"/>
    <property type="resolution" value="3.58 A"/>
    <property type="chains" value="B/F=2-103"/>
</dbReference>
<dbReference type="PDB" id="8IHT">
    <property type="method" value="EM"/>
    <property type="resolution" value="3.72 A"/>
    <property type="chains" value="B/F=2-103"/>
</dbReference>
<dbReference type="PDB" id="8JHO">
    <property type="method" value="EM"/>
    <property type="resolution" value="7.60 A"/>
    <property type="chains" value="B/F/b/f=2-103"/>
</dbReference>
<dbReference type="PDB" id="8KD2">
    <property type="method" value="EM"/>
    <property type="resolution" value="3.02 A"/>
    <property type="chains" value="P/T=2-103"/>
</dbReference>
<dbReference type="PDB" id="8KD3">
    <property type="method" value="EM"/>
    <property type="resolution" value="2.90 A"/>
    <property type="chains" value="P/T=2-103"/>
</dbReference>
<dbReference type="PDB" id="8KD4">
    <property type="method" value="EM"/>
    <property type="resolution" value="2.93 A"/>
    <property type="chains" value="P/T=2-103"/>
</dbReference>
<dbReference type="PDB" id="8KD5">
    <property type="method" value="EM"/>
    <property type="resolution" value="2.90 A"/>
    <property type="chains" value="P/T=2-103"/>
</dbReference>
<dbReference type="PDB" id="8KD6">
    <property type="method" value="EM"/>
    <property type="resolution" value="3.07 A"/>
    <property type="chains" value="P/T=2-103"/>
</dbReference>
<dbReference type="PDB" id="8KD7">
    <property type="method" value="EM"/>
    <property type="resolution" value="3.09 A"/>
    <property type="chains" value="P/T=2-103"/>
</dbReference>
<dbReference type="PDB" id="8OF4">
    <property type="method" value="EM"/>
    <property type="resolution" value="2.94 A"/>
    <property type="chains" value="B/F=1-103"/>
</dbReference>
<dbReference type="PDB" id="8PC5">
    <property type="method" value="EM"/>
    <property type="resolution" value="3.04 A"/>
    <property type="chains" value="B/F=2-103"/>
</dbReference>
<dbReference type="PDB" id="8PC6">
    <property type="method" value="EM"/>
    <property type="resolution" value="3.04 A"/>
    <property type="chains" value="B/F=2-103"/>
</dbReference>
<dbReference type="PDB" id="8PEO">
    <property type="method" value="EM"/>
    <property type="resolution" value="2.69 A"/>
    <property type="chains" value="B/F=2-103"/>
</dbReference>
<dbReference type="PDB" id="8PEP">
    <property type="method" value="EM"/>
    <property type="resolution" value="3.33 A"/>
    <property type="chains" value="B/F=2-103"/>
</dbReference>
<dbReference type="PDB" id="8RUP">
    <property type="method" value="EM"/>
    <property type="resolution" value="2.42 A"/>
    <property type="chains" value="B/F=1-103"/>
</dbReference>
<dbReference type="PDB" id="8RUQ">
    <property type="method" value="EM"/>
    <property type="resolution" value="2.29 A"/>
    <property type="chains" value="B/F=1-103"/>
</dbReference>
<dbReference type="PDB" id="8SIY">
    <property type="method" value="EM"/>
    <property type="resolution" value="2.90 A"/>
    <property type="chains" value="D/H=2-103"/>
</dbReference>
<dbReference type="PDB" id="8SVF">
    <property type="method" value="EM"/>
    <property type="resolution" value="3.20 A"/>
    <property type="chains" value="B/F=1-103"/>
</dbReference>
<dbReference type="PDB" id="8T3T">
    <property type="method" value="EM"/>
    <property type="resolution" value="3.21 A"/>
    <property type="chains" value="B/F=2-103"/>
</dbReference>
<dbReference type="PDB" id="8T3W">
    <property type="method" value="EM"/>
    <property type="resolution" value="3.25 A"/>
    <property type="chains" value="B/F=2-103"/>
</dbReference>
<dbReference type="PDB" id="8T3Y">
    <property type="method" value="EM"/>
    <property type="resolution" value="3.47 A"/>
    <property type="chains" value="B/F=2-103"/>
</dbReference>
<dbReference type="PDB" id="8T9F">
    <property type="method" value="EM"/>
    <property type="resolution" value="2.60 A"/>
    <property type="chains" value="B/F=1-103"/>
</dbReference>
<dbReference type="PDB" id="8T9G">
    <property type="method" value="EM"/>
    <property type="resolution" value="6.20 A"/>
    <property type="chains" value="J/X=1-103"/>
</dbReference>
<dbReference type="PDB" id="8T9H">
    <property type="method" value="EM"/>
    <property type="resolution" value="3.37 A"/>
    <property type="chains" value="B/F=1-103"/>
</dbReference>
<dbReference type="PDB" id="8TAS">
    <property type="method" value="EM"/>
    <property type="resolution" value="4.10 A"/>
    <property type="chains" value="J/X=1-103"/>
</dbReference>
<dbReference type="PDB" id="8TB9">
    <property type="method" value="EM"/>
    <property type="resolution" value="4.00 A"/>
    <property type="chains" value="J/X=1-103"/>
</dbReference>
<dbReference type="PDB" id="8THU">
    <property type="method" value="EM"/>
    <property type="resolution" value="3.10 A"/>
    <property type="chains" value="B/F=1-103"/>
</dbReference>
<dbReference type="PDB" id="8TOF">
    <property type="method" value="EM"/>
    <property type="resolution" value="2.80 A"/>
    <property type="chains" value="b/f=1-103"/>
</dbReference>
<dbReference type="PDB" id="8U5H">
    <property type="method" value="EM"/>
    <property type="resolution" value="3.23 A"/>
    <property type="chains" value="J/Q=1-103"/>
</dbReference>
<dbReference type="PDB" id="8UXQ">
    <property type="method" value="EM"/>
    <property type="resolution" value="6.30 A"/>
    <property type="chains" value="F/L=2-103"/>
</dbReference>
<dbReference type="PDB" id="8V25">
    <property type="method" value="EM"/>
    <property type="resolution" value="3.32 A"/>
    <property type="chains" value="B/F=1-103"/>
</dbReference>
<dbReference type="PDB" id="8V26">
    <property type="method" value="EM"/>
    <property type="resolution" value="3.33 A"/>
    <property type="chains" value="B/F=1-103"/>
</dbReference>
<dbReference type="PDB" id="8V27">
    <property type="method" value="EM"/>
    <property type="resolution" value="3.34 A"/>
    <property type="chains" value="B/F=1-103"/>
</dbReference>
<dbReference type="PDB" id="8V28">
    <property type="method" value="EM"/>
    <property type="resolution" value="3.36 A"/>
    <property type="chains" value="B/F=1-103"/>
</dbReference>
<dbReference type="PDB" id="8V4Y">
    <property type="method" value="EM"/>
    <property type="resolution" value="2.80 A"/>
    <property type="chains" value="B/F=2-103"/>
</dbReference>
<dbReference type="PDB" id="8V6V">
    <property type="method" value="EM"/>
    <property type="resolution" value="2.80 A"/>
    <property type="chains" value="B/F=2-103"/>
</dbReference>
<dbReference type="PDB" id="8V7L">
    <property type="method" value="EM"/>
    <property type="resolution" value="2.90 A"/>
    <property type="chains" value="B/F=2-103"/>
</dbReference>
<dbReference type="PDB" id="8VX5">
    <property type="method" value="EM"/>
    <property type="resolution" value="3.30 A"/>
    <property type="chains" value="B/F=1-103"/>
</dbReference>
<dbReference type="PDB" id="8VX6">
    <property type="method" value="EM"/>
    <property type="resolution" value="3.20 A"/>
    <property type="chains" value="B/F=1-103"/>
</dbReference>
<dbReference type="PDB" id="8XJV">
    <property type="method" value="EM"/>
    <property type="resolution" value="3.60 A"/>
    <property type="chains" value="0/1/2/3/4/5/6/7/8/9/CD/a2/a3/a4/a5/a6/a7/a8/a9/v/w/x/y/z=1-103"/>
</dbReference>
<dbReference type="PDB" id="9B2S">
    <property type="method" value="EM"/>
    <property type="resolution" value="3.01 A"/>
    <property type="chains" value="B/F=1-103"/>
</dbReference>
<dbReference type="PDB" id="9B2T">
    <property type="method" value="EM"/>
    <property type="resolution" value="2.99 A"/>
    <property type="chains" value="B/F=1-103"/>
</dbReference>
<dbReference type="PDB" id="9B3P">
    <property type="method" value="EM"/>
    <property type="resolution" value="3.00 A"/>
    <property type="chains" value="B/F=1-103"/>
</dbReference>
<dbReference type="PDB" id="9DBY">
    <property type="method" value="EM"/>
    <property type="resolution" value="2.80 A"/>
    <property type="chains" value="B/F=1-103"/>
</dbReference>
<dbReference type="PDB" id="9DDE">
    <property type="method" value="EM"/>
    <property type="resolution" value="3.20 A"/>
    <property type="chains" value="B/F=1-103"/>
</dbReference>
<dbReference type="PDB" id="9DG3">
    <property type="method" value="EM"/>
    <property type="resolution" value="3.46 A"/>
    <property type="chains" value="B/F=1-103"/>
</dbReference>
<dbReference type="PDB" id="9DGG">
    <property type="method" value="EM"/>
    <property type="resolution" value="2.98 A"/>
    <property type="chains" value="B/F=1-103"/>
</dbReference>
<dbReference type="PDB" id="9E1L">
    <property type="method" value="EM"/>
    <property type="resolution" value="3.15 A"/>
    <property type="chains" value="B/F=1-103"/>
</dbReference>
<dbReference type="PDB" id="9E1M">
    <property type="method" value="EM"/>
    <property type="resolution" value="3.25 A"/>
    <property type="chains" value="B/F=1-103"/>
</dbReference>
<dbReference type="PDB" id="9E1N">
    <property type="method" value="EM"/>
    <property type="resolution" value="3.40 A"/>
    <property type="chains" value="B/F=1-103"/>
</dbReference>
<dbReference type="PDB" id="9E1O">
    <property type="method" value="EM"/>
    <property type="resolution" value="3.30 A"/>
    <property type="chains" value="B/F=1-103"/>
</dbReference>
<dbReference type="PDB" id="9E1P">
    <property type="method" value="EM"/>
    <property type="resolution" value="3.25 A"/>
    <property type="chains" value="B/F=1-103"/>
</dbReference>
<dbReference type="PDB" id="9E1Q">
    <property type="method" value="EM"/>
    <property type="resolution" value="3.10 A"/>
    <property type="chains" value="B/F=1-103"/>
</dbReference>
<dbReference type="PDB" id="9E1R">
    <property type="method" value="EM"/>
    <property type="resolution" value="3.10 A"/>
    <property type="chains" value="B/F=1-103"/>
</dbReference>
<dbReference type="PDB" id="9E1U">
    <property type="method" value="EM"/>
    <property type="resolution" value="3.10 A"/>
    <property type="chains" value="B/F=1-103"/>
</dbReference>
<dbReference type="PDB" id="9E1V">
    <property type="method" value="EM"/>
    <property type="resolution" value="3.10 A"/>
    <property type="chains" value="B/F=1-103"/>
</dbReference>
<dbReference type="PDB" id="9E1W">
    <property type="method" value="EM"/>
    <property type="resolution" value="3.20 A"/>
    <property type="chains" value="B/F=1-103"/>
</dbReference>
<dbReference type="PDB" id="9E1X">
    <property type="method" value="EM"/>
    <property type="resolution" value="3.40 A"/>
    <property type="chains" value="B/F=1-103"/>
</dbReference>
<dbReference type="PDB" id="9E1Y">
    <property type="method" value="EM"/>
    <property type="resolution" value="2.60 A"/>
    <property type="chains" value="B/F=1-103"/>
</dbReference>
<dbReference type="PDB" id="9EGX">
    <property type="method" value="EM"/>
    <property type="resolution" value="2.90 A"/>
    <property type="chains" value="b/f=1-103"/>
</dbReference>
<dbReference type="PDB" id="9EGY">
    <property type="method" value="EM"/>
    <property type="resolution" value="2.90 A"/>
    <property type="chains" value="b/f=1-103"/>
</dbReference>
<dbReference type="PDB" id="9EGZ">
    <property type="method" value="EM"/>
    <property type="resolution" value="2.90 A"/>
    <property type="chains" value="b/f=1-103"/>
</dbReference>
<dbReference type="PDB" id="9EH0">
    <property type="method" value="EM"/>
    <property type="resolution" value="3.60 A"/>
    <property type="chains" value="b/f=1-103"/>
</dbReference>
<dbReference type="PDB" id="9EH1">
    <property type="method" value="EM"/>
    <property type="resolution" value="3.10 A"/>
    <property type="chains" value="b/f=25-102"/>
</dbReference>
<dbReference type="PDB" id="9EH2">
    <property type="method" value="EM"/>
    <property type="resolution" value="3.10 A"/>
    <property type="chains" value="b/f=1-103"/>
</dbReference>
<dbReference type="PDB" id="9GD0">
    <property type="method" value="EM"/>
    <property type="resolution" value="2.80 A"/>
    <property type="chains" value="B/F/L/P=1-103"/>
</dbReference>
<dbReference type="PDB" id="9GD1">
    <property type="method" value="EM"/>
    <property type="resolution" value="4.00 A"/>
    <property type="chains" value="B/F/L/P=1-103"/>
</dbReference>
<dbReference type="PDB" id="9GD2">
    <property type="method" value="EM"/>
    <property type="resolution" value="4.20 A"/>
    <property type="chains" value="B/F/L/P=1-103"/>
</dbReference>
<dbReference type="PDB" id="9GD3">
    <property type="method" value="EM"/>
    <property type="resolution" value="3.00 A"/>
    <property type="chains" value="B/F=1-103"/>
</dbReference>
<dbReference type="PDBsum" id="1AOI"/>
<dbReference type="PDBsum" id="1KX3"/>
<dbReference type="PDBsum" id="1KX4"/>
<dbReference type="PDBsum" id="1KX5"/>
<dbReference type="PDBsum" id="1M18"/>
<dbReference type="PDBsum" id="1M19"/>
<dbReference type="PDBsum" id="1M1A"/>
<dbReference type="PDBsum" id="1P34"/>
<dbReference type="PDBsum" id="1P3A"/>
<dbReference type="PDBsum" id="1P3B"/>
<dbReference type="PDBsum" id="1P3F"/>
<dbReference type="PDBsum" id="1P3G"/>
<dbReference type="PDBsum" id="1P3I"/>
<dbReference type="PDBsum" id="1P3K"/>
<dbReference type="PDBsum" id="1P3L"/>
<dbReference type="PDBsum" id="1P3M"/>
<dbReference type="PDBsum" id="1P3O"/>
<dbReference type="PDBsum" id="1P3P"/>
<dbReference type="PDBsum" id="1S32"/>
<dbReference type="PDBsum" id="1ZBB"/>
<dbReference type="PDBsum" id="1ZLA"/>
<dbReference type="PDBsum" id="2F8N"/>
<dbReference type="PDBsum" id="2FJ7"/>
<dbReference type="PDBsum" id="2HUE"/>
<dbReference type="PDBsum" id="2IO5"/>
<dbReference type="PDBsum" id="2NZD"/>
<dbReference type="PDBsum" id="3B6F"/>
<dbReference type="PDBsum" id="3B6G"/>
<dbReference type="PDBsum" id="3C1B"/>
<dbReference type="PDBsum" id="3C1C"/>
<dbReference type="PDBsum" id="3KUY"/>
<dbReference type="PDBsum" id="3KWQ"/>
<dbReference type="PDBsum" id="3KXB"/>
<dbReference type="PDBsum" id="3LEL"/>
<dbReference type="PDBsum" id="3LJA"/>
<dbReference type="PDBsum" id="3LZ0"/>
<dbReference type="PDBsum" id="3LZ1"/>
<dbReference type="PDBsum" id="3MGP"/>
<dbReference type="PDBsum" id="3MGQ"/>
<dbReference type="PDBsum" id="3MGR"/>
<dbReference type="PDBsum" id="3MGS"/>
<dbReference type="PDBsum" id="3MNN"/>
<dbReference type="PDBsum" id="3MVD"/>
<dbReference type="PDBsum" id="3O62"/>
<dbReference type="PDBsum" id="3REH"/>
<dbReference type="PDBsum" id="3REI"/>
<dbReference type="PDBsum" id="3REJ"/>
<dbReference type="PDBsum" id="3REK"/>
<dbReference type="PDBsum" id="3REL"/>
<dbReference type="PDBsum" id="3TU4"/>
<dbReference type="PDBsum" id="3UT9"/>
<dbReference type="PDBsum" id="3UTA"/>
<dbReference type="PDBsum" id="3UTB"/>
<dbReference type="PDBsum" id="4EO5"/>
<dbReference type="PDBsum" id="4J8U"/>
<dbReference type="PDBsum" id="4J8V"/>
<dbReference type="PDBsum" id="4J8W"/>
<dbReference type="PDBsum" id="4J8X"/>
<dbReference type="PDBsum" id="4KGC"/>
<dbReference type="PDBsum" id="4LD9"/>
<dbReference type="PDBsum" id="4R8P"/>
<dbReference type="PDBsum" id="4WU8"/>
<dbReference type="PDBsum" id="4WU9"/>
<dbReference type="PDBsum" id="4XUJ"/>
<dbReference type="PDBsum" id="4XZQ"/>
<dbReference type="PDBsum" id="4YS3"/>
<dbReference type="PDBsum" id="4Z66"/>
<dbReference type="PDBsum" id="4ZBJ"/>
<dbReference type="PDBsum" id="4ZUX"/>
<dbReference type="PDBsum" id="5BS7"/>
<dbReference type="PDBsum" id="5BSA"/>
<dbReference type="PDBsum" id="5CP6"/>
<dbReference type="PDBsum" id="5DNM"/>
<dbReference type="PDBsum" id="5DNN"/>
<dbReference type="PDBsum" id="5E5A"/>
<dbReference type="PDBsum" id="5F99"/>
<dbReference type="PDBsum" id="5HQ2"/>
<dbReference type="PDBsum" id="5KGF"/>
<dbReference type="PDBsum" id="5MLU"/>
<dbReference type="PDBsum" id="5NL0"/>
<dbReference type="PDBsum" id="5O9G"/>
<dbReference type="PDBsum" id="5OMX"/>
<dbReference type="PDBsum" id="5ONG"/>
<dbReference type="PDBsum" id="5ONW"/>
<dbReference type="PDBsum" id="5OXV"/>
<dbReference type="PDBsum" id="5OY7"/>
<dbReference type="PDBsum" id="5X0X"/>
<dbReference type="PDBsum" id="5X0Y"/>
<dbReference type="PDBsum" id="5XF6"/>
<dbReference type="PDBsum" id="5Z3L"/>
<dbReference type="PDBsum" id="5Z3O"/>
<dbReference type="PDBsum" id="5Z3U"/>
<dbReference type="PDBsum" id="5Z3V"/>
<dbReference type="PDBsum" id="6ESF"/>
<dbReference type="PDBsum" id="6ESG"/>
<dbReference type="PDBsum" id="6ESH"/>
<dbReference type="PDBsum" id="6ESI"/>
<dbReference type="PDBsum" id="6FQ5"/>
<dbReference type="PDBsum" id="6FQ6"/>
<dbReference type="PDBsum" id="6FQ8"/>
<dbReference type="PDBsum" id="6FTX"/>
<dbReference type="PDBsum" id="6G0L"/>
<dbReference type="PDBsum" id="6GYT"/>
<dbReference type="PDBsum" id="6I84"/>
<dbReference type="PDBsum" id="6IRO"/>
<dbReference type="PDBsum" id="6IY2"/>
<dbReference type="PDBsum" id="6IY3"/>
<dbReference type="PDBsum" id="6J99"/>
<dbReference type="PDBsum" id="6JM9"/>
<dbReference type="PDBsum" id="6JMA"/>
<dbReference type="PDBsum" id="6JYL"/>
<dbReference type="PDBsum" id="6K1P"/>
<dbReference type="PDBsum" id="6KIU"/>
<dbReference type="PDBsum" id="6KIV"/>
<dbReference type="PDBsum" id="6KIW"/>
<dbReference type="PDBsum" id="6KIX"/>
<dbReference type="PDBsum" id="6KIZ"/>
<dbReference type="PDBsum" id="6KW3"/>
<dbReference type="PDBsum" id="6KW4"/>
<dbReference type="PDBsum" id="6KW5"/>
<dbReference type="PDBsum" id="6LTJ"/>
<dbReference type="PDBsum" id="6NE3"/>
<dbReference type="PDBsum" id="6NJ9"/>
<dbReference type="PDBsum" id="6NN6"/>
<dbReference type="PDBsum" id="6NOG"/>
<dbReference type="PDBsum" id="6NQA"/>
<dbReference type="PDBsum" id="6NZO"/>
<dbReference type="PDBsum" id="6O22"/>
<dbReference type="PDBsum" id="6O96"/>
<dbReference type="PDBsum" id="6OM3"/>
<dbReference type="PDBsum" id="6PA7"/>
<dbReference type="PDBsum" id="6PWV"/>
<dbReference type="PDBsum" id="6PWW"/>
<dbReference type="PDBsum" id="6PWX"/>
<dbReference type="PDBsum" id="6PX1"/>
<dbReference type="PDBsum" id="6PX3"/>
<dbReference type="PDBsum" id="6R1T"/>
<dbReference type="PDBsum" id="6R1U"/>
<dbReference type="PDBsum" id="6R25"/>
<dbReference type="PDBsum" id="6RYR"/>
<dbReference type="PDBsum" id="6RYU"/>
<dbReference type="PDBsum" id="6S01"/>
<dbReference type="PDBsum" id="6T9L"/>
<dbReference type="PDBsum" id="6TDA"/>
<dbReference type="PDBsum" id="6TEM"/>
<dbReference type="PDBsum" id="6UGM"/>
<dbReference type="PDBsum" id="6UH5"/>
<dbReference type="PDBsum" id="6UXW"/>
<dbReference type="PDBsum" id="6VEN"/>
<dbReference type="PDBsum" id="6VYP"/>
<dbReference type="PDBsum" id="6VZ4"/>
<dbReference type="PDBsum" id="6W5I"/>
<dbReference type="PDBsum" id="6W5M"/>
<dbReference type="PDBsum" id="6W5N"/>
<dbReference type="PDBsum" id="6WKR"/>
<dbReference type="PDBsum" id="6WZ5"/>
<dbReference type="PDBsum" id="6WZ9"/>
<dbReference type="PDBsum" id="6X0N"/>
<dbReference type="PDBsum" id="6YN1"/>
<dbReference type="PDBsum" id="6ZHX"/>
<dbReference type="PDBsum" id="6ZHY"/>
<dbReference type="PDBsum" id="7AT8"/>
<dbReference type="PDBsum" id="7CRO"/>
<dbReference type="PDBsum" id="7CRP"/>
<dbReference type="PDBsum" id="7CRQ"/>
<dbReference type="PDBsum" id="7CRR"/>
<dbReference type="PDBsum" id="7E8I"/>
<dbReference type="PDBsum" id="7EA5"/>
<dbReference type="PDBsum" id="7EA8"/>
<dbReference type="PDBsum" id="7EG6"/>
<dbReference type="PDBsum" id="7EGP"/>
<dbReference type="PDBsum" id="7ENN"/>
<dbReference type="PDBsum" id="7K6P"/>
<dbReference type="PDBsum" id="7K6Q"/>
<dbReference type="PDBsum" id="7KBD"/>
<dbReference type="PDBsum" id="7KBE"/>
<dbReference type="PDBsum" id="7KBF"/>
<dbReference type="PDBsum" id="7KTQ"/>
<dbReference type="PDBsum" id="7M1X"/>
<dbReference type="PDBsum" id="7MBM"/>
<dbReference type="PDBsum" id="7MBN"/>
<dbReference type="PDBsum" id="7NKX"/>
<dbReference type="PDBsum" id="7NKY"/>
<dbReference type="PDBsum" id="7OH9"/>
<dbReference type="PDBsum" id="7OHA"/>
<dbReference type="PDBsum" id="7OHB"/>
<dbReference type="PDBsum" id="7OHC"/>
<dbReference type="PDBsum" id="7OTQ"/>
<dbReference type="PDBsum" id="7SSA"/>
<dbReference type="PDBsum" id="7SWY"/>
<dbReference type="PDBsum" id="7TN2"/>
<dbReference type="PDBsum" id="7UD5"/>
<dbReference type="PDBsum" id="7UNC"/>
<dbReference type="PDBsum" id="7UND"/>
<dbReference type="PDBsum" id="7UNK"/>
<dbReference type="PDBsum" id="7UX9"/>
<dbReference type="PDBsum" id="7VDT"/>
<dbReference type="PDBsum" id="7VDV"/>
<dbReference type="PDBsum" id="7VVU"/>
<dbReference type="PDBsum" id="7VVZ"/>
<dbReference type="PDBsum" id="7X3T"/>
<dbReference type="PDBsum" id="7X3V"/>
<dbReference type="PDBsum" id="7X3W"/>
<dbReference type="PDBsum" id="7X3X"/>
<dbReference type="PDBsum" id="7XFC"/>
<dbReference type="PDBsum" id="7XFH"/>
<dbReference type="PDBsum" id="7XFI"/>
<dbReference type="PDBsum" id="7XFJ"/>
<dbReference type="PDBsum" id="7XFL"/>
<dbReference type="PDBsum" id="7XFM"/>
<dbReference type="PDBsum" id="7XFN"/>
<dbReference type="PDBsum" id="7XNP"/>
<dbReference type="PDBsum" id="7XPX"/>
<dbReference type="PDBsum" id="7YI1"/>
<dbReference type="PDBsum" id="7YI4"/>
<dbReference type="PDBsum" id="7YI5"/>
<dbReference type="PDBsum" id="7YRG"/>
<dbReference type="PDBsum" id="7ZS9"/>
<dbReference type="PDBsum" id="7ZSA"/>
<dbReference type="PDBsum" id="7ZSB"/>
<dbReference type="PDBsum" id="8A3Y"/>
<dbReference type="PDBsum" id="8B0A"/>
<dbReference type="PDBsum" id="8BVW"/>
<dbReference type="PDBsum" id="8BYQ"/>
<dbReference type="PDBsum" id="8BZ1"/>
<dbReference type="PDBsum" id="8CBN"/>
<dbReference type="PDBsum" id="8CBQ"/>
<dbReference type="PDBsum" id="8CEO"/>
<dbReference type="PDBsum" id="8CWW"/>
<dbReference type="PDBsum" id="8CZE"/>
<dbReference type="PDBsum" id="8DU4"/>
<dbReference type="PDBsum" id="8ETT"/>
<dbReference type="PDBsum" id="8ETV"/>
<dbReference type="PDBsum" id="8EU2"/>
<dbReference type="PDBsum" id="8EUE"/>
<dbReference type="PDBsum" id="8EUJ"/>
<dbReference type="PDBsum" id="8F86"/>
<dbReference type="PDBsum" id="8G57"/>
<dbReference type="PDBsum" id="8G6G"/>
<dbReference type="PDBsum" id="8G6H"/>
<dbReference type="PDBsum" id="8G6Q"/>
<dbReference type="PDBsum" id="8G6S"/>
<dbReference type="PDBsum" id="8G86"/>
<dbReference type="PDBsum" id="8G88"/>
<dbReference type="PDBsum" id="8G8B"/>
<dbReference type="PDBsum" id="8G8G"/>
<dbReference type="PDBsum" id="8GPN"/>
<dbReference type="PDBsum" id="8GXQ"/>
<dbReference type="PDBsum" id="8GXS"/>
<dbReference type="PDBsum" id="8HXY"/>
<dbReference type="PDBsum" id="8HXZ"/>
<dbReference type="PDBsum" id="8HY0"/>
<dbReference type="PDBsum" id="8IHM"/>
<dbReference type="PDBsum" id="8IHT"/>
<dbReference type="PDBsum" id="8JHO"/>
<dbReference type="PDBsum" id="8KD2"/>
<dbReference type="PDBsum" id="8KD3"/>
<dbReference type="PDBsum" id="8KD4"/>
<dbReference type="PDBsum" id="8KD5"/>
<dbReference type="PDBsum" id="8KD6"/>
<dbReference type="PDBsum" id="8KD7"/>
<dbReference type="PDBsum" id="8OF4"/>
<dbReference type="PDBsum" id="8PC5"/>
<dbReference type="PDBsum" id="8PC6"/>
<dbReference type="PDBsum" id="8PEO"/>
<dbReference type="PDBsum" id="8PEP"/>
<dbReference type="PDBsum" id="8RUP"/>
<dbReference type="PDBsum" id="8RUQ"/>
<dbReference type="PDBsum" id="8SIY"/>
<dbReference type="PDBsum" id="8SVF"/>
<dbReference type="PDBsum" id="8T3T"/>
<dbReference type="PDBsum" id="8T3W"/>
<dbReference type="PDBsum" id="8T3Y"/>
<dbReference type="PDBsum" id="8T9F"/>
<dbReference type="PDBsum" id="8T9G"/>
<dbReference type="PDBsum" id="8T9H"/>
<dbReference type="PDBsum" id="8TAS"/>
<dbReference type="PDBsum" id="8TB9"/>
<dbReference type="PDBsum" id="8THU"/>
<dbReference type="PDBsum" id="8TOF"/>
<dbReference type="PDBsum" id="8U5H"/>
<dbReference type="PDBsum" id="8UXQ"/>
<dbReference type="PDBsum" id="8V25"/>
<dbReference type="PDBsum" id="8V26"/>
<dbReference type="PDBsum" id="8V27"/>
<dbReference type="PDBsum" id="8V28"/>
<dbReference type="PDBsum" id="8V4Y"/>
<dbReference type="PDBsum" id="8V6V"/>
<dbReference type="PDBsum" id="8V7L"/>
<dbReference type="PDBsum" id="8VX5"/>
<dbReference type="PDBsum" id="8VX6"/>
<dbReference type="PDBsum" id="8XJV"/>
<dbReference type="PDBsum" id="9B2S"/>
<dbReference type="PDBsum" id="9B2T"/>
<dbReference type="PDBsum" id="9B3P"/>
<dbReference type="PDBsum" id="9DBY"/>
<dbReference type="PDBsum" id="9DDE"/>
<dbReference type="PDBsum" id="9DG3"/>
<dbReference type="PDBsum" id="9DGG"/>
<dbReference type="PDBsum" id="9E1L"/>
<dbReference type="PDBsum" id="9E1M"/>
<dbReference type="PDBsum" id="9E1N"/>
<dbReference type="PDBsum" id="9E1O"/>
<dbReference type="PDBsum" id="9E1P"/>
<dbReference type="PDBsum" id="9E1Q"/>
<dbReference type="PDBsum" id="9E1R"/>
<dbReference type="PDBsum" id="9E1U"/>
<dbReference type="PDBsum" id="9E1V"/>
<dbReference type="PDBsum" id="9E1W"/>
<dbReference type="PDBsum" id="9E1X"/>
<dbReference type="PDBsum" id="9E1Y"/>
<dbReference type="PDBsum" id="9EGX"/>
<dbReference type="PDBsum" id="9EGY"/>
<dbReference type="PDBsum" id="9EGZ"/>
<dbReference type="PDBsum" id="9EH0"/>
<dbReference type="PDBsum" id="9EH1"/>
<dbReference type="PDBsum" id="9EH2"/>
<dbReference type="PDBsum" id="9GD0"/>
<dbReference type="PDBsum" id="9GD1"/>
<dbReference type="PDBsum" id="9GD2"/>
<dbReference type="PDBsum" id="9GD3"/>
<dbReference type="EMDB" id="EMD-0458"/>
<dbReference type="EMDB" id="EMD-0468"/>
<dbReference type="EMDB" id="EMD-0480"/>
<dbReference type="EMDB" id="EMD-0559"/>
<dbReference type="EMDB" id="EMD-0693"/>
<dbReference type="EMDB" id="EMD-0694"/>
<dbReference type="EMDB" id="EMD-0695"/>
<dbReference type="EMDB" id="EMD-0777"/>
<dbReference type="EMDB" id="EMD-0778"/>
<dbReference type="EMDB" id="EMD-0779"/>
<dbReference type="EMDB" id="EMD-0974"/>
<dbReference type="EMDB" id="EMD-10058"/>
<dbReference type="EMDB" id="EMD-10059"/>
<dbReference type="EMDB" id="EMD-10069"/>
<dbReference type="EMDB" id="EMD-10415"/>
<dbReference type="EMDB" id="EMD-10465"/>
<dbReference type="EMDB" id="EMD-11102"/>
<dbReference type="EMDB" id="EMD-11220"/>
<dbReference type="EMDB" id="EMD-11221"/>
<dbReference type="EMDB" id="EMD-11910"/>
<dbReference type="EMDB" id="EMD-12449"/>
<dbReference type="EMDB" id="EMD-12450"/>
<dbReference type="EMDB" id="EMD-12897"/>
<dbReference type="EMDB" id="EMD-12898"/>
<dbReference type="EMDB" id="EMD-12899"/>
<dbReference type="EMDB" id="EMD-12900"/>
<dbReference type="EMDB" id="EMD-13065"/>
<dbReference type="EMDB" id="EMD-14927"/>
<dbReference type="EMDB" id="EMD-14928"/>
<dbReference type="EMDB" id="EMD-14929"/>
<dbReference type="EMDB" id="EMD-15127"/>
<dbReference type="EMDB" id="EMD-15777"/>
<dbReference type="EMDB" id="EMD-16274"/>
<dbReference type="EMDB" id="EMD-16331"/>
<dbReference type="EMDB" id="EMD-16335"/>
<dbReference type="EMDB" id="EMD-16546"/>
<dbReference type="EMDB" id="EMD-16549"/>
<dbReference type="EMDB" id="EMD-16611"/>
<dbReference type="EMDB" id="EMD-16842"/>
<dbReference type="EMDB" id="EMD-16845"/>
<dbReference type="EMDB" id="EMD-17594"/>
<dbReference type="EMDB" id="EMD-17595"/>
<dbReference type="EMDB" id="EMD-17633"/>
<dbReference type="EMDB" id="EMD-17634"/>
<dbReference type="EMDB" id="EMD-17944"/>
<dbReference type="EMDB" id="EMD-19513"/>
<dbReference type="EMDB" id="EMD-19514"/>
<dbReference type="EMDB" id="EMD-20281"/>
<dbReference type="EMDB" id="EMD-20512"/>
<dbReference type="EMDB" id="EMD-20513"/>
<dbReference type="EMDB" id="EMD-20514"/>
<dbReference type="EMDB" id="EMD-20516"/>
<dbReference type="EMDB" id="EMD-20517"/>
<dbReference type="EMDB" id="EMD-20765"/>
<dbReference type="EMDB" id="EMD-20767"/>
<dbReference type="EMDB" id="EMD-20934"/>
<dbReference type="EMDB" id="EMD-21157"/>
<dbReference type="EMDB" id="EMD-21484"/>
<dbReference type="EMDB" id="EMD-21542"/>
<dbReference type="EMDB" id="EMD-21543"/>
<dbReference type="EMDB" id="EMD-21544"/>
<dbReference type="EMDB" id="EMD-21707"/>
<dbReference type="EMDB" id="EMD-21970"/>
<dbReference type="EMDB" id="EMD-21971"/>
<dbReference type="EMDB" id="EMD-21980"/>
<dbReference type="EMDB" id="EMD-22691"/>
<dbReference type="EMDB" id="EMD-22692"/>
<dbReference type="EMDB" id="EMD-22790"/>
<dbReference type="EMDB" id="EMD-22791"/>
<dbReference type="EMDB" id="EMD-22792"/>
<dbReference type="EMDB" id="EMD-23026"/>
<dbReference type="EMDB" id="EMD-23626"/>
<dbReference type="EMDB" id="EMD-23738"/>
<dbReference type="EMDB" id="EMD-23739"/>
<dbReference type="EMDB" id="EMD-25406"/>
<dbReference type="EMDB" id="EMD-26454"/>
<dbReference type="EMDB" id="EMD-26620"/>
<dbReference type="EMDB" id="EMD-26621"/>
<dbReference type="EMDB" id="EMD-26625"/>
<dbReference type="EMDB" id="EMD-26855"/>
<dbReference type="EMDB" id="EMD-27030"/>
<dbReference type="EMDB" id="EMD-27096"/>
<dbReference type="EMDB" id="EMD-27715"/>
<dbReference type="EMDB" id="EMD-28598"/>
<dbReference type="EMDB" id="EMD-28600"/>
<dbReference type="EMDB" id="EMD-28602"/>
<dbReference type="EMDB" id="EMD-28915"/>
<dbReference type="EMDB" id="EMD-29735"/>
<dbReference type="EMDB" id="EMD-29767"/>
<dbReference type="EMDB" id="EMD-29769"/>
<dbReference type="EMDB" id="EMD-29778"/>
<dbReference type="EMDB" id="EMD-29781"/>
<dbReference type="EMDB" id="EMD-29837"/>
<dbReference type="EMDB" id="EMD-29843"/>
<dbReference type="EMDB" id="EMD-29845"/>
<dbReference type="EMDB" id="EMD-29850"/>
<dbReference type="EMDB" id="EMD-30453"/>
<dbReference type="EMDB" id="EMD-30455"/>
<dbReference type="EMDB" id="EMD-30456"/>
<dbReference type="EMDB" id="EMD-30457"/>
<dbReference type="EMDB" id="EMD-31020"/>
<dbReference type="EMDB" id="EMD-31039"/>
<dbReference type="EMDB" id="EMD-31040"/>
<dbReference type="EMDB" id="EMD-31106"/>
<dbReference type="EMDB" id="EMD-31137"/>
<dbReference type="EMDB" id="EMD-31217"/>
<dbReference type="EMDB" id="EMD-31925"/>
<dbReference type="EMDB" id="EMD-31926"/>
<dbReference type="EMDB" id="EMD-32148"/>
<dbReference type="EMDB" id="EMD-32150"/>
<dbReference type="EMDB" id="EMD-32992"/>
<dbReference type="EMDB" id="EMD-32994"/>
<dbReference type="EMDB" id="EMD-32995"/>
<dbReference type="EMDB" id="EMD-32996"/>
<dbReference type="EMDB" id="EMD-33171"/>
<dbReference type="EMDB" id="EMD-33172"/>
<dbReference type="EMDB" id="EMD-33173"/>
<dbReference type="EMDB" id="EMD-33174"/>
<dbReference type="EMDB" id="EMD-33175"/>
<dbReference type="EMDB" id="EMD-33176"/>
<dbReference type="EMDB" id="EMD-33177"/>
<dbReference type="EMDB" id="EMD-33322"/>
<dbReference type="EMDB" id="EMD-33385"/>
<dbReference type="EMDB" id="EMD-33848"/>
<dbReference type="EMDB" id="EMD-33851"/>
<dbReference type="EMDB" id="EMD-33852"/>
<dbReference type="EMDB" id="EMD-34053"/>
<dbReference type="EMDB" id="EMD-34055"/>
<dbReference type="EMDB" id="EMD-34195"/>
<dbReference type="EMDB" id="EMD-34359"/>
<dbReference type="EMDB" id="EMD-34360"/>
<dbReference type="EMDB" id="EMD-37122"/>
<dbReference type="EMDB" id="EMD-37123"/>
<dbReference type="EMDB" id="EMD-37124"/>
<dbReference type="EMDB" id="EMD-37125"/>
<dbReference type="EMDB" id="EMD-37126"/>
<dbReference type="EMDB" id="EMD-37127"/>
<dbReference type="EMDB" id="EMD-3765"/>
<dbReference type="EMDB" id="EMD-38407"/>
<dbReference type="EMDB" id="EMD-3947"/>
<dbReference type="EMDB" id="EMD-3948"/>
<dbReference type="EMDB" id="EMD-3949"/>
<dbReference type="EMDB" id="EMD-3950"/>
<dbReference type="EMDB" id="EMD-40789"/>
<dbReference type="EMDB" id="EMD-41011"/>
<dbReference type="EMDB" id="EMD-41015"/>
<dbReference type="EMDB" id="EMD-41016"/>
<dbReference type="EMDB" id="EMD-41110"/>
<dbReference type="EMDB" id="EMD-41141"/>
<dbReference type="EMDB" id="EMD-41146"/>
<dbReference type="EMDB" id="EMD-41449"/>
<dbReference type="EMDB" id="EMD-41839"/>
<dbReference type="EMDB" id="EMD-41851"/>
<dbReference type="EMDB" id="EMD-41852"/>
<dbReference type="EMDB" id="EMD-41853"/>
<dbReference type="EMDB" id="EMD-42774"/>
<dbReference type="EMDB" id="EMD-4297"/>
<dbReference type="EMDB" id="EMD-42977"/>
<dbReference type="EMDB" id="EMD-4298"/>
<dbReference type="EMDB" id="EMD-4299"/>
<dbReference type="EMDB" id="EMD-43000"/>
<dbReference type="EMDB" id="EMD-43001"/>
<dbReference type="EMDB" id="EMD-43002"/>
<dbReference type="EMDB" id="EMD-43003"/>
<dbReference type="EMDB" id="EMD-43004"/>
<dbReference type="EMDB" id="EMD-43005"/>
<dbReference type="EMDB" id="EMD-4318"/>
<dbReference type="EMDB" id="EMD-4336"/>
<dbReference type="EMDB" id="EMD-43608"/>
<dbReference type="EMDB" id="EMD-43609"/>
<dbReference type="EMDB" id="EMD-44113"/>
<dbReference type="EMDB" id="EMD-44114"/>
<dbReference type="EMDB" id="EMD-44148"/>
<dbReference type="EMDB" id="EMD-4429"/>
<dbReference type="EMDB" id="EMD-46728"/>
<dbReference type="EMDB" id="EMD-46733"/>
<dbReference type="EMDB" id="EMD-46771"/>
<dbReference type="EMDB" id="EMD-46822"/>
<dbReference type="EMDB" id="EMD-46823"/>
<dbReference type="EMDB" id="EMD-4705"/>
<dbReference type="EMDB" id="EMD-4710"/>
<dbReference type="EMDB" id="EMD-47412"/>
<dbReference type="EMDB" id="EMD-47413"/>
<dbReference type="EMDB" id="EMD-47414"/>
<dbReference type="EMDB" id="EMD-47415"/>
<dbReference type="EMDB" id="EMD-47416"/>
<dbReference type="EMDB" id="EMD-47417"/>
<dbReference type="EMDB" id="EMD-47418"/>
<dbReference type="EMDB" id="EMD-47421"/>
<dbReference type="EMDB" id="EMD-47422"/>
<dbReference type="EMDB" id="EMD-47423"/>
<dbReference type="EMDB" id="EMD-47424"/>
<dbReference type="EMDB" id="EMD-47425"/>
<dbReference type="EMDB" id="EMD-47427"/>
<dbReference type="EMDB" id="EMD-47428"/>
<dbReference type="EMDB" id="EMD-48039"/>
<dbReference type="EMDB" id="EMD-48040"/>
<dbReference type="EMDB" id="EMD-48041"/>
<dbReference type="EMDB" id="EMD-48042"/>
<dbReference type="EMDB" id="EMD-48043"/>
<dbReference type="EMDB" id="EMD-48044"/>
<dbReference type="EMDB" id="EMD-51238"/>
<dbReference type="EMDB" id="EMD-51241"/>
<dbReference type="EMDB" id="EMD-51244"/>
<dbReference type="EMDB" id="EMD-51247"/>
<dbReference type="EMDB" id="EMD-6699"/>
<dbReference type="EMDB" id="EMD-6700"/>
<dbReference type="EMDB" id="EMD-6879"/>
<dbReference type="EMDB" id="EMD-6880"/>
<dbReference type="EMDB" id="EMD-6882"/>
<dbReference type="EMDB" id="EMD-6883"/>
<dbReference type="EMDB" id="EMD-8246"/>
<dbReference type="EMDB" id="EMD-9356"/>
<dbReference type="EMDB" id="EMD-9384"/>
<dbReference type="EMDB" id="EMD-9718"/>
<dbReference type="EMDB" id="EMD-9719"/>
<dbReference type="EMDB" id="EMD-9720"/>
<dbReference type="EMDB" id="EMD-9748"/>
<dbReference type="EMDB" id="EMD-9783"/>
<dbReference type="EMDB" id="EMD-9843"/>
<dbReference type="EMDB" id="EMD-9844"/>
<dbReference type="EMDB" id="EMD-9998"/>
<dbReference type="EMDB" id="EMD-9999"/>
<dbReference type="SASBDB" id="P62799"/>
<dbReference type="SMR" id="P62799"/>
<dbReference type="BioGRID" id="104647">
    <property type="interactions" value="16"/>
</dbReference>
<dbReference type="DIP" id="DIP-37429N"/>
<dbReference type="IntAct" id="P62799">
    <property type="interactions" value="14"/>
</dbReference>
<dbReference type="MoonProt" id="P62799"/>
<dbReference type="DNASU" id="447787"/>
<dbReference type="GeneID" id="108703479"/>
<dbReference type="GeneID" id="108703798"/>
<dbReference type="GeneID" id="108703799"/>
<dbReference type="GeneID" id="108703833"/>
<dbReference type="GeneID" id="108704306"/>
<dbReference type="GeneID" id="108705162"/>
<dbReference type="GeneID" id="108705878"/>
<dbReference type="GeneID" id="108717647"/>
<dbReference type="GeneID" id="108717648"/>
<dbReference type="GeneID" id="121398086"/>
<dbReference type="GeneID" id="121398087"/>
<dbReference type="GeneID" id="121398088"/>
<dbReference type="GeneID" id="121398089"/>
<dbReference type="GeneID" id="121398090"/>
<dbReference type="GeneID" id="121398091"/>
<dbReference type="GeneID" id="121399129"/>
<dbReference type="GeneID" id="121399130"/>
<dbReference type="GeneID" id="121399131"/>
<dbReference type="GeneID" id="121399132"/>
<dbReference type="GeneID" id="121402233"/>
<dbReference type="GeneID" id="121402238"/>
<dbReference type="GeneID" id="121402239"/>
<dbReference type="GeneID" id="121402244"/>
<dbReference type="GeneID" id="121402249"/>
<dbReference type="GeneID" id="121402250"/>
<dbReference type="GeneID" id="121402262"/>
<dbReference type="GeneID" id="121402263"/>
<dbReference type="GeneID" id="121402264"/>
<dbReference type="GeneID" id="121402265"/>
<dbReference type="GeneID" id="121402266"/>
<dbReference type="GeneID" id="447787"/>
<dbReference type="KEGG" id="xla:108703479"/>
<dbReference type="KEGG" id="xla:108703798"/>
<dbReference type="KEGG" id="xla:108703799"/>
<dbReference type="KEGG" id="xla:108703833"/>
<dbReference type="KEGG" id="xla:108704306"/>
<dbReference type="KEGG" id="xla:108705162"/>
<dbReference type="KEGG" id="xla:108705878"/>
<dbReference type="KEGG" id="xla:108717647"/>
<dbReference type="KEGG" id="xla:108717648"/>
<dbReference type="KEGG" id="xla:447787"/>
<dbReference type="AGR" id="Xenbase:XB-GENE-6493984"/>
<dbReference type="CTD" id="108704306"/>
<dbReference type="CTD" id="447787"/>
<dbReference type="Xenbase" id="XB-GENE-6493984">
    <property type="gene designation" value="h4c1.L"/>
</dbReference>
<dbReference type="OMA" id="LYGTHHL"/>
<dbReference type="OrthoDB" id="9948295at2759"/>
<dbReference type="EvolutionaryTrace" id="P62799"/>
<dbReference type="Proteomes" id="UP000186698">
    <property type="component" value="Chromosome 3S"/>
</dbReference>
<dbReference type="Proteomes" id="UP000186698">
    <property type="component" value="Chromosome 5S"/>
</dbReference>
<dbReference type="Proteomes" id="UP000186698">
    <property type="component" value="Chromosome 9_10L"/>
</dbReference>
<dbReference type="Proteomes" id="UP000186698">
    <property type="component" value="Chromosome 9_10S"/>
</dbReference>
<dbReference type="Bgee" id="108703479">
    <property type="expression patterns" value="Expressed in oocyte and 11 other cell types or tissues"/>
</dbReference>
<dbReference type="GO" id="GO:0000786">
    <property type="term" value="C:nucleosome"/>
    <property type="evidence" value="ECO:0007669"/>
    <property type="project" value="UniProtKB-KW"/>
</dbReference>
<dbReference type="GO" id="GO:0005634">
    <property type="term" value="C:nucleus"/>
    <property type="evidence" value="ECO:0007669"/>
    <property type="project" value="UniProtKB-SubCell"/>
</dbReference>
<dbReference type="GO" id="GO:0003677">
    <property type="term" value="F:DNA binding"/>
    <property type="evidence" value="ECO:0000318"/>
    <property type="project" value="GO_Central"/>
</dbReference>
<dbReference type="GO" id="GO:0046982">
    <property type="term" value="F:protein heterodimerization activity"/>
    <property type="evidence" value="ECO:0007669"/>
    <property type="project" value="InterPro"/>
</dbReference>
<dbReference type="GO" id="GO:0030527">
    <property type="term" value="F:structural constituent of chromatin"/>
    <property type="evidence" value="ECO:0007669"/>
    <property type="project" value="InterPro"/>
</dbReference>
<dbReference type="GO" id="GO:0006334">
    <property type="term" value="P:nucleosome assembly"/>
    <property type="evidence" value="ECO:0000318"/>
    <property type="project" value="GO_Central"/>
</dbReference>
<dbReference type="CDD" id="cd22912">
    <property type="entry name" value="HFD_H4"/>
    <property type="match status" value="1"/>
</dbReference>
<dbReference type="DisProt" id="DP01390"/>
<dbReference type="FunFam" id="1.10.20.10:FF:000002">
    <property type="entry name" value="Histone H4"/>
    <property type="match status" value="1"/>
</dbReference>
<dbReference type="Gene3D" id="1.10.20.10">
    <property type="entry name" value="Histone, subunit A"/>
    <property type="match status" value="1"/>
</dbReference>
<dbReference type="IDEAL" id="IID50145"/>
<dbReference type="InterPro" id="IPR035425">
    <property type="entry name" value="CENP-T/H4_C"/>
</dbReference>
<dbReference type="InterPro" id="IPR009072">
    <property type="entry name" value="Histone-fold"/>
</dbReference>
<dbReference type="InterPro" id="IPR001951">
    <property type="entry name" value="Histone_H4"/>
</dbReference>
<dbReference type="InterPro" id="IPR019809">
    <property type="entry name" value="Histone_H4_CS"/>
</dbReference>
<dbReference type="InterPro" id="IPR004823">
    <property type="entry name" value="TAF_TATA-bd_Histone-like_dom"/>
</dbReference>
<dbReference type="PANTHER" id="PTHR10484">
    <property type="entry name" value="HISTONE H4"/>
    <property type="match status" value="1"/>
</dbReference>
<dbReference type="Pfam" id="PF15511">
    <property type="entry name" value="CENP-T_C"/>
    <property type="match status" value="1"/>
</dbReference>
<dbReference type="PRINTS" id="PR00623">
    <property type="entry name" value="HISTONEH4"/>
</dbReference>
<dbReference type="SMART" id="SM00417">
    <property type="entry name" value="H4"/>
    <property type="match status" value="1"/>
</dbReference>
<dbReference type="SMART" id="SM00803">
    <property type="entry name" value="TAF"/>
    <property type="match status" value="1"/>
</dbReference>
<dbReference type="SUPFAM" id="SSF47113">
    <property type="entry name" value="Histone-fold"/>
    <property type="match status" value="1"/>
</dbReference>
<dbReference type="PROSITE" id="PS00047">
    <property type="entry name" value="HISTONE_H4"/>
    <property type="match status" value="1"/>
</dbReference>
<evidence type="ECO:0000250" key="1"/>
<evidence type="ECO:0000250" key="2">
    <source>
        <dbReference type="UniProtKB" id="P62805"/>
    </source>
</evidence>
<evidence type="ECO:0000250" key="3">
    <source>
        <dbReference type="UniProtKB" id="P62806"/>
    </source>
</evidence>
<evidence type="ECO:0000256" key="4">
    <source>
        <dbReference type="SAM" id="MobiDB-lite"/>
    </source>
</evidence>
<evidence type="ECO:0000305" key="5"/>
<evidence type="ECO:0007744" key="6">
    <source>
        <dbReference type="PDB" id="6WZ5"/>
    </source>
</evidence>
<evidence type="ECO:0007744" key="7">
    <source>
        <dbReference type="PDB" id="6WZ9"/>
    </source>
</evidence>
<evidence type="ECO:0007744" key="8">
    <source>
        <dbReference type="PDB" id="6X0N"/>
    </source>
</evidence>
<evidence type="ECO:0007744" key="9">
    <source>
        <dbReference type="PDB" id="6ZHX"/>
    </source>
</evidence>
<evidence type="ECO:0007744" key="10">
    <source>
        <dbReference type="PDB" id="6ZHY"/>
    </source>
</evidence>
<evidence type="ECO:0007744" key="11">
    <source>
        <dbReference type="PDB" id="7ENN"/>
    </source>
</evidence>
<evidence type="ECO:0007744" key="12">
    <source>
        <dbReference type="PDB" id="7OTQ"/>
    </source>
</evidence>
<evidence type="ECO:0007829" key="13">
    <source>
        <dbReference type="PDB" id="1KX5"/>
    </source>
</evidence>
<evidence type="ECO:0007829" key="14">
    <source>
        <dbReference type="PDB" id="1M1A"/>
    </source>
</evidence>
<evidence type="ECO:0007829" key="15">
    <source>
        <dbReference type="PDB" id="2HUE"/>
    </source>
</evidence>
<evidence type="ECO:0007829" key="16">
    <source>
        <dbReference type="PDB" id="3C1B"/>
    </source>
</evidence>
<evidence type="ECO:0007829" key="17">
    <source>
        <dbReference type="PDB" id="7ENN"/>
    </source>
</evidence>
<evidence type="ECO:0007829" key="18">
    <source>
        <dbReference type="PDB" id="8PEO"/>
    </source>
</evidence>
<accession>P62799</accession>
<accession>P02304</accession>
<accession>P02305</accession>
<accession>Q6AZG5</accession>
<proteinExistence type="evidence at protein level"/>
<keyword id="KW-0002">3D-structure</keyword>
<keyword id="KW-0007">Acetylation</keyword>
<keyword id="KW-0158">Chromosome</keyword>
<keyword id="KW-0164">Citrullination</keyword>
<keyword id="KW-0238">DNA-binding</keyword>
<keyword id="KW-0379">Hydroxylation</keyword>
<keyword id="KW-1017">Isopeptide bond</keyword>
<keyword id="KW-0488">Methylation</keyword>
<keyword id="KW-0544">Nucleosome core</keyword>
<keyword id="KW-0539">Nucleus</keyword>
<keyword id="KW-0597">Phosphoprotein</keyword>
<keyword id="KW-1185">Reference proteome</keyword>
<keyword id="KW-0832">Ubl conjugation</keyword>
<reference key="1">
    <citation type="journal article" date="1981" name="FEBS Lett.">
        <title>Primary structure of the histone H3 and H4 genes and their flanking sequences in a minor histone gene cluster of Xenopus laevis.</title>
        <authorList>
            <person name="Moorman A.F.M."/>
            <person name="de Boer P.A.J."/>
            <person name="de Laaf R.T.M."/>
            <person name="van Dongen W.M.A.M."/>
            <person name="Destree O.H.J."/>
        </authorList>
    </citation>
    <scope>NUCLEOTIDE SEQUENCE [GENOMIC DNA]</scope>
</reference>
<reference key="2">
    <citation type="journal article" date="1983" name="Nucleic Acids Res.">
        <title>Transcription of a cloned Xenopus laevis H4 histone gene in the homologous frog oocyte system depends on an evolutionary conserved sequence motif in the -50 region.</title>
        <authorList>
            <person name="Clerc R.G."/>
            <person name="Bucher P."/>
            <person name="Strub K."/>
            <person name="Birnstiel M.L."/>
        </authorList>
    </citation>
    <scope>NUCLEOTIDE SEQUENCE [GENOMIC DNA]</scope>
</reference>
<reference key="3">
    <citation type="journal article" date="1985" name="J. Mol. Biol.">
        <title>Genomic organization and nucleotide sequence of two distinct histone gene clusters from Xenopus laevis. Identification of novel conserved upstream sequence elements.</title>
        <authorList>
            <person name="Perry M."/>
            <person name="Thomsen G.H."/>
            <person name="Roeder R.G."/>
        </authorList>
    </citation>
    <scope>NUCLEOTIDE SEQUENCE [GENOMIC DNA]</scope>
</reference>
<reference key="4">
    <citation type="submission" date="2004-07" db="EMBL/GenBank/DDBJ databases">
        <authorList>
            <consortium name="NIH - Xenopus Gene Collection (XGC) project"/>
        </authorList>
    </citation>
    <scope>NUCLEOTIDE SEQUENCE [LARGE SCALE MRNA]</scope>
    <source>
        <tissue>Embryo</tissue>
    </source>
</reference>
<reference key="5">
    <citation type="journal article" date="1997" name="Nature">
        <title>Crystal structure of the nucleosome core particle at 2.8 A resolution.</title>
        <authorList>
            <person name="Luger K."/>
            <person name="Mader A.W."/>
            <person name="Richmond R.K."/>
            <person name="Sargent D.F."/>
            <person name="Richmond T.J."/>
        </authorList>
    </citation>
    <scope>X-RAY CRYSTALLOGRAPHY (2.8 ANGSTROMS) OF 17-103</scope>
</reference>
<reference evidence="6 7 8" key="6">
    <citation type="journal article" date="2020" name="Nature">
        <title>Bridging of DNA breaks activates PARP2-HPF1 to modify chromatin.</title>
        <authorList>
            <person name="Bilokapic S."/>
            <person name="Suskiewicz M.J."/>
            <person name="Ahel I."/>
            <person name="Halic M."/>
        </authorList>
    </citation>
    <scope>STRUCTURE BY ELECTRON MICROSCOPY (2.20 ANGSTROMS) OF 2-103 OF NUCLEOSOME CORE COMPLEX IN COMPLEX WITH PARP2 AND HPF1</scope>
</reference>
<reference evidence="9 10" key="7">
    <citation type="journal article" date="2020" name="Cell Rep.">
        <title>Mechanistic insights into regulation of the ALC1 remodeler by the nucleosome acidic patch.</title>
        <authorList>
            <person name="Lehmann L.C."/>
            <person name="Bacic L."/>
            <person name="Hewitt G."/>
            <person name="Brackmann K."/>
            <person name="Sabantsev A."/>
            <person name="Gaullier G."/>
            <person name="Pytharopoulou S."/>
            <person name="Degliesposti G."/>
            <person name="Okkenhaug H."/>
            <person name="Tan S."/>
            <person name="Costa A."/>
            <person name="Skehel J.M."/>
            <person name="Boulton S.J."/>
            <person name="Deindl S."/>
        </authorList>
    </citation>
    <scope>STRUCTURE BY ELECTRON MICROSCOPY (2.50 ANGSTROMS) OF NUCLEOSOME CORE COMPLEX IN COMPLEX WITH CHD1L</scope>
</reference>
<reference evidence="12" key="8">
    <citation type="journal article" date="2021" name="Elife">
        <title>Structure and dynamics of the chromatin remodeler ALC1 bound to a PARylated nucleosome.</title>
        <authorList>
            <person name="Bacic L."/>
            <person name="Gaullier G."/>
            <person name="Sabantsev A."/>
            <person name="Lehmann L.C."/>
            <person name="Brackmann K."/>
            <person name="Dimakou D."/>
            <person name="Halic M."/>
            <person name="Hewitt G."/>
            <person name="Boulton S.J."/>
            <person name="Deindl S."/>
        </authorList>
    </citation>
    <scope>STRUCTURE BY ELECTRON MICROSCOPY (4.80 ANGSTROMS) OF NUCLEOSOME CORE COMPLEX IN COMPLEX WITH CHD1L</scope>
</reference>
<reference evidence="11" key="9">
    <citation type="journal article" date="2021" name="Nat. Commun.">
        <title>Structural basis of ALC1/CHD1L autoinhibition and the mechanism of activation by the nucleosome.</title>
        <authorList>
            <person name="Wang L."/>
            <person name="Chen K."/>
            <person name="Chen Z."/>
        </authorList>
    </citation>
    <scope>STRUCTURE BY ELECTRON MICROSCOPY (2.80 ANGSTROMS) OF NUCLEOSOME CORE COMPLEX IN COMPLEX WITH CHD1L</scope>
</reference>
<organism>
    <name type="scientific">Xenopus laevis</name>
    <name type="common">African clawed frog</name>
    <dbReference type="NCBI Taxonomy" id="8355"/>
    <lineage>
        <taxon>Eukaryota</taxon>
        <taxon>Metazoa</taxon>
        <taxon>Chordata</taxon>
        <taxon>Craniata</taxon>
        <taxon>Vertebrata</taxon>
        <taxon>Euteleostomi</taxon>
        <taxon>Amphibia</taxon>
        <taxon>Batrachia</taxon>
        <taxon>Anura</taxon>
        <taxon>Pipoidea</taxon>
        <taxon>Pipidae</taxon>
        <taxon>Xenopodinae</taxon>
        <taxon>Xenopus</taxon>
        <taxon>Xenopus</taxon>
    </lineage>
</organism>
<name>H4_XENLA</name>